<feature type="chain" id="PRO_0000405136" description="Genome polyprotein">
    <location>
        <begin position="1"/>
        <end position="3433"/>
    </location>
</feature>
<feature type="chain" id="PRO_0000037703" description="Capsid protein C" evidence="2">
    <location>
        <begin position="1"/>
        <end position="105"/>
    </location>
</feature>
<feature type="propeptide" id="PRO_0000405137" description="ER anchor for the capsid protein C, removed in mature form by serine protease NS3" evidence="2">
    <location>
        <begin position="106"/>
        <end position="123"/>
    </location>
</feature>
<feature type="chain" id="PRO_0000405138" description="Protein prM" evidence="2">
    <location>
        <begin position="124"/>
        <end position="290"/>
    </location>
</feature>
<feature type="chain" id="PRO_0000037704" description="Peptide pr" evidence="2">
    <location>
        <begin position="124"/>
        <end position="215"/>
    </location>
</feature>
<feature type="chain" id="PRO_0000037705" description="Small envelope protein M" evidence="2">
    <location>
        <begin position="216"/>
        <end position="290"/>
    </location>
</feature>
<feature type="chain" id="PRO_0000037706" description="Envelope protein E" evidence="2">
    <location>
        <begin position="291"/>
        <end position="791"/>
    </location>
</feature>
<feature type="chain" id="PRO_0000037707" description="Non-structural protein 1" evidence="2">
    <location>
        <begin position="792"/>
        <end position="1143"/>
    </location>
</feature>
<feature type="chain" id="PRO_0000037708" description="Non-structural protein 2A" evidence="2">
    <location>
        <begin position="1144"/>
        <end position="1374"/>
    </location>
</feature>
<feature type="chain" id="PRO_0000037709" description="Serine protease subunit NS2B" evidence="2">
    <location>
        <begin position="1375"/>
        <end position="1505"/>
    </location>
</feature>
<feature type="chain" id="PRO_0000037710" description="Serine protease/Helicase NS3" evidence="2">
    <location>
        <begin position="1506"/>
        <end position="2124"/>
    </location>
</feature>
<feature type="chain" id="PRO_0000037711" description="Non-structural protein 4A" evidence="2">
    <location>
        <begin position="2125"/>
        <end position="2250"/>
    </location>
</feature>
<feature type="peptide" id="PRO_0000405139" description="Peptide 2k" evidence="2">
    <location>
        <begin position="2251"/>
        <end position="2273"/>
    </location>
</feature>
<feature type="chain" id="PRO_0000037712" description="Non-structural protein 4B" evidence="2">
    <location>
        <begin position="2274"/>
        <end position="2528"/>
    </location>
</feature>
<feature type="chain" id="PRO_0000037713" description="RNA-directed RNA polymerase NS5" evidence="2">
    <location>
        <begin position="2529"/>
        <end position="3433"/>
    </location>
</feature>
<feature type="topological domain" description="Cytoplasmic" evidence="10">
    <location>
        <begin position="2"/>
        <end position="105"/>
    </location>
</feature>
<feature type="transmembrane region" description="Helical" evidence="10">
    <location>
        <begin position="106"/>
        <end position="126"/>
    </location>
</feature>
<feature type="topological domain" description="Extracellular" evidence="10">
    <location>
        <begin position="127"/>
        <end position="248"/>
    </location>
</feature>
<feature type="transmembrane region" description="Helical" evidence="10">
    <location>
        <begin position="249"/>
        <end position="269"/>
    </location>
</feature>
<feature type="topological domain" description="Cytoplasmic" evidence="10">
    <location>
        <begin position="270"/>
        <end position="273"/>
    </location>
</feature>
<feature type="transmembrane region" description="Helical" evidence="33">
    <location>
        <begin position="274"/>
        <end position="290"/>
    </location>
</feature>
<feature type="topological domain" description="Extracellular" evidence="10">
    <location>
        <begin position="291"/>
        <end position="743"/>
    </location>
</feature>
<feature type="transmembrane region" description="Helical" evidence="10">
    <location>
        <begin position="744"/>
        <end position="764"/>
    </location>
</feature>
<feature type="topological domain" description="Cytoplasmic" evidence="10">
    <location>
        <begin position="765"/>
        <end position="770"/>
    </location>
</feature>
<feature type="transmembrane region" description="Helical" evidence="10">
    <location>
        <begin position="771"/>
        <end position="791"/>
    </location>
</feature>
<feature type="topological domain" description="Extracellular" evidence="10">
    <location>
        <begin position="792"/>
        <end position="1216"/>
    </location>
</feature>
<feature type="transmembrane region" description="Helical" evidence="10">
    <location>
        <begin position="1217"/>
        <end position="1237"/>
    </location>
</feature>
<feature type="topological domain" description="Cytoplasmic" evidence="10">
    <location>
        <begin position="1238"/>
        <end position="1247"/>
    </location>
</feature>
<feature type="transmembrane region" description="Helical" evidence="10">
    <location>
        <begin position="1248"/>
        <end position="1268"/>
    </location>
</feature>
<feature type="topological domain" description="Lumenal" evidence="10">
    <location>
        <begin position="1269"/>
        <end position="1288"/>
    </location>
</feature>
<feature type="transmembrane region" description="Helical" evidence="10">
    <location>
        <begin position="1289"/>
        <end position="1309"/>
    </location>
</feature>
<feature type="topological domain" description="Cytoplasmic" evidence="10">
    <location>
        <begin position="1310"/>
        <end position="1316"/>
    </location>
</feature>
<feature type="transmembrane region" description="Helical" evidence="10">
    <location>
        <begin position="1317"/>
        <end position="1335"/>
    </location>
</feature>
<feature type="topological domain" description="Lumenal" evidence="10">
    <location>
        <begin position="1336"/>
        <end position="1345"/>
    </location>
</feature>
<feature type="transmembrane region" description="Helical" evidence="10">
    <location>
        <begin position="1346"/>
        <end position="1366"/>
    </location>
</feature>
<feature type="topological domain" description="Cytoplasmic" evidence="10">
    <location>
        <begin position="1367"/>
        <end position="1375"/>
    </location>
</feature>
<feature type="transmembrane region" description="Helical" evidence="10">
    <location>
        <begin position="1376"/>
        <end position="1396"/>
    </location>
</feature>
<feature type="topological domain" description="Lumenal" evidence="10">
    <location>
        <begin position="1397"/>
        <end position="1399"/>
    </location>
</feature>
<feature type="transmembrane region" description="Helical" evidence="10">
    <location>
        <begin position="1400"/>
        <end position="1420"/>
    </location>
</feature>
<feature type="topological domain" description="Cytoplasmic" evidence="10">
    <location>
        <begin position="1421"/>
        <end position="1477"/>
    </location>
</feature>
<feature type="intramembrane region" description="Helical" evidence="10">
    <location>
        <begin position="1478"/>
        <end position="1498"/>
    </location>
</feature>
<feature type="topological domain" description="Cytoplasmic" evidence="10">
    <location>
        <begin position="1499"/>
        <end position="2174"/>
    </location>
</feature>
<feature type="transmembrane region" description="Helical" evidence="10">
    <location>
        <begin position="2175"/>
        <end position="2195"/>
    </location>
</feature>
<feature type="topological domain" description="Lumenal" evidence="10">
    <location>
        <begin position="2196"/>
        <end position="2200"/>
    </location>
</feature>
<feature type="intramembrane region" description="Helical" evidence="10">
    <location>
        <begin position="2201"/>
        <end position="2221"/>
    </location>
</feature>
<feature type="topological domain" description="Lumenal" evidence="10">
    <location>
        <position position="2222"/>
    </location>
</feature>
<feature type="transmembrane region" description="Helical" evidence="10">
    <location>
        <begin position="2223"/>
        <end position="2243"/>
    </location>
</feature>
<feature type="topological domain" description="Cytoplasmic" evidence="10">
    <location>
        <begin position="2244"/>
        <end position="2258"/>
    </location>
</feature>
<feature type="transmembrane region" description="Helical; Note=Signal for NS4B" evidence="33">
    <location>
        <begin position="2259"/>
        <end position="2273"/>
    </location>
</feature>
<feature type="topological domain" description="Lumenal" evidence="10">
    <location>
        <begin position="2274"/>
        <end position="2312"/>
    </location>
</feature>
<feature type="intramembrane region" description="Helical" evidence="10">
    <location>
        <begin position="2313"/>
        <end position="2333"/>
    </location>
</feature>
<feature type="topological domain" description="Lumenal" evidence="10">
    <location>
        <begin position="2334"/>
        <end position="2380"/>
    </location>
</feature>
<feature type="transmembrane region" description="Helical" evidence="10">
    <location>
        <begin position="2381"/>
        <end position="2401"/>
    </location>
</feature>
<feature type="topological domain" description="Cytoplasmic" evidence="10">
    <location>
        <begin position="2402"/>
        <end position="2444"/>
    </location>
</feature>
<feature type="transmembrane region" description="Helical" evidence="10">
    <location>
        <begin position="2445"/>
        <end position="2465"/>
    </location>
</feature>
<feature type="topological domain" description="Lumenal" evidence="10">
    <location>
        <begin position="2466"/>
        <end position="2470"/>
    </location>
</feature>
<feature type="transmembrane region" description="Helical" evidence="10">
    <location>
        <begin position="2471"/>
        <end position="2491"/>
    </location>
</feature>
<feature type="topological domain" description="Cytoplasmic" evidence="10">
    <location>
        <begin position="2492"/>
        <end position="3433"/>
    </location>
</feature>
<feature type="domain" description="Peptidase S7" evidence="15">
    <location>
        <begin position="1506"/>
        <end position="1683"/>
    </location>
</feature>
<feature type="domain" description="Helicase ATP-binding" evidence="12">
    <location>
        <begin position="1686"/>
        <end position="1842"/>
    </location>
</feature>
<feature type="domain" description="Helicase C-terminal" evidence="13">
    <location>
        <begin position="1853"/>
        <end position="2018"/>
    </location>
</feature>
<feature type="domain" description="mRNA cap 0-1 NS5-type MT" evidence="16">
    <location>
        <begin position="2529"/>
        <end position="2794"/>
    </location>
</feature>
<feature type="domain" description="RdRp catalytic" evidence="11">
    <location>
        <begin position="3058"/>
        <end position="3210"/>
    </location>
</feature>
<feature type="region of interest" description="Interaction with host EXOC1" evidence="2">
    <location>
        <begin position="2"/>
        <end position="15"/>
    </location>
</feature>
<feature type="region of interest" description="Hydrophobic; homodimerization of capsid protein C" evidence="6">
    <location>
        <begin position="37"/>
        <end position="72"/>
    </location>
</feature>
<feature type="region of interest" description="Fusion peptide" evidence="3">
    <location>
        <begin position="388"/>
        <end position="401"/>
    </location>
</feature>
<feature type="region of interest" description="Interacts with and activates NS3 protease" evidence="14">
    <location>
        <begin position="1428"/>
        <end position="1467"/>
    </location>
</feature>
<feature type="region of interest" description="Important for RNA-binding" evidence="4">
    <location>
        <begin position="1690"/>
        <end position="1693"/>
    </location>
</feature>
<feature type="region of interest" description="Regulates the ATPase activity of NS3 helicase" evidence="9">
    <location>
        <begin position="2169"/>
        <end position="2173"/>
    </location>
</feature>
<feature type="short sequence motif" description="DEAH box" evidence="12">
    <location>
        <begin position="1790"/>
        <end position="1793"/>
    </location>
</feature>
<feature type="short sequence motif" description="Nuclear localization signal" evidence="30">
    <location>
        <begin position="2917"/>
        <end position="2919"/>
    </location>
</feature>
<feature type="short sequence motif" description="PDZ-binding" evidence="2">
    <location>
        <begin position="3431"/>
        <end position="3433"/>
    </location>
</feature>
<feature type="active site" description="Charge relay system; for serine protease NS3 activity" evidence="15">
    <location>
        <position position="1556"/>
    </location>
</feature>
<feature type="active site" description="Charge relay system; for serine protease NS3 activity" evidence="15">
    <location>
        <position position="1580"/>
    </location>
</feature>
<feature type="active site" description="Charge relay system; for serine protease NS3 activity" evidence="15">
    <location>
        <position position="1640"/>
    </location>
</feature>
<feature type="active site" description="For 2'-O-MTase activity" evidence="8">
    <location>
        <position position="2589"/>
    </location>
</feature>
<feature type="active site" description="For 2'-O-MTase activity" evidence="8">
    <location>
        <position position="2674"/>
    </location>
</feature>
<feature type="active site" description="For 2'-O-MTase activity" evidence="8">
    <location>
        <position position="2710"/>
    </location>
</feature>
<feature type="active site" description="For 2'-O-MTase activity" evidence="8">
    <location>
        <position position="2746"/>
    </location>
</feature>
<feature type="binding site" evidence="12">
    <location>
        <begin position="1699"/>
        <end position="1706"/>
    </location>
    <ligand>
        <name>ATP</name>
        <dbReference type="ChEBI" id="CHEBI:30616"/>
    </ligand>
</feature>
<feature type="binding site" evidence="16">
    <location>
        <position position="2584"/>
    </location>
    <ligand>
        <name>S-adenosyl-L-methionine</name>
        <dbReference type="ChEBI" id="CHEBI:59789"/>
    </ligand>
</feature>
<feature type="binding site" evidence="16">
    <location>
        <position position="2614"/>
    </location>
    <ligand>
        <name>S-adenosyl-L-methionine</name>
        <dbReference type="ChEBI" id="CHEBI:59789"/>
    </ligand>
</feature>
<feature type="binding site" evidence="16">
    <location>
        <position position="2615"/>
    </location>
    <ligand>
        <name>S-adenosyl-L-methionine</name>
        <dbReference type="ChEBI" id="CHEBI:59789"/>
    </ligand>
</feature>
<feature type="binding site" evidence="16">
    <location>
        <position position="2632"/>
    </location>
    <ligand>
        <name>S-adenosyl-L-methionine</name>
        <dbReference type="ChEBI" id="CHEBI:59789"/>
    </ligand>
</feature>
<feature type="binding site" evidence="16">
    <location>
        <position position="2633"/>
    </location>
    <ligand>
        <name>S-adenosyl-L-methionine</name>
        <dbReference type="ChEBI" id="CHEBI:59789"/>
    </ligand>
</feature>
<feature type="binding site" evidence="16">
    <location>
        <position position="2659"/>
    </location>
    <ligand>
        <name>S-adenosyl-L-methionine</name>
        <dbReference type="ChEBI" id="CHEBI:59789"/>
    </ligand>
</feature>
<feature type="binding site" evidence="16">
    <location>
        <position position="2660"/>
    </location>
    <ligand>
        <name>S-adenosyl-L-methionine</name>
        <dbReference type="ChEBI" id="CHEBI:59789"/>
    </ligand>
</feature>
<feature type="binding site" evidence="16">
    <location>
        <position position="2675"/>
    </location>
    <ligand>
        <name>S-adenosyl-L-methionine</name>
        <dbReference type="ChEBI" id="CHEBI:59789"/>
    </ligand>
</feature>
<feature type="binding site" evidence="16">
    <location>
        <position position="2748"/>
    </location>
    <ligand>
        <name>S-adenosyl-L-methionine</name>
        <dbReference type="ChEBI" id="CHEBI:59789"/>
    </ligand>
</feature>
<feature type="binding site" evidence="23">
    <location>
        <position position="2968"/>
    </location>
    <ligand>
        <name>Zn(2+)</name>
        <dbReference type="ChEBI" id="CHEBI:29105"/>
        <label>1</label>
    </ligand>
</feature>
<feature type="binding site" evidence="23">
    <location>
        <position position="2972"/>
    </location>
    <ligand>
        <name>Zn(2+)</name>
        <dbReference type="ChEBI" id="CHEBI:29105"/>
        <label>1</label>
    </ligand>
</feature>
<feature type="binding site" evidence="23">
    <location>
        <position position="2977"/>
    </location>
    <ligand>
        <name>Zn(2+)</name>
        <dbReference type="ChEBI" id="CHEBI:29105"/>
        <label>1</label>
    </ligand>
</feature>
<feature type="binding site" evidence="23">
    <location>
        <position position="2980"/>
    </location>
    <ligand>
        <name>Zn(2+)</name>
        <dbReference type="ChEBI" id="CHEBI:29105"/>
        <label>1</label>
    </ligand>
</feature>
<feature type="binding site" evidence="23">
    <location>
        <position position="3245"/>
    </location>
    <ligand>
        <name>Zn(2+)</name>
        <dbReference type="ChEBI" id="CHEBI:29105"/>
        <label>2</label>
    </ligand>
</feature>
<feature type="binding site" evidence="23">
    <location>
        <position position="3261"/>
    </location>
    <ligand>
        <name>Zn(2+)</name>
        <dbReference type="ChEBI" id="CHEBI:29105"/>
        <label>2</label>
    </ligand>
</feature>
<feature type="binding site" evidence="23">
    <location>
        <position position="3380"/>
    </location>
    <ligand>
        <name>Zn(2+)</name>
        <dbReference type="ChEBI" id="CHEBI:29105"/>
        <label>2</label>
    </ligand>
</feature>
<feature type="site" description="Cleavage; by viral protease NS3" evidence="2">
    <location>
        <begin position="105"/>
        <end position="106"/>
    </location>
</feature>
<feature type="site" description="Cleavage; by host signal peptidase" evidence="2">
    <location>
        <begin position="123"/>
        <end position="124"/>
    </location>
</feature>
<feature type="site" description="Cleavage; by host furin" evidence="2">
    <location>
        <begin position="215"/>
        <end position="216"/>
    </location>
</feature>
<feature type="site" description="Cleavage; by host signal peptidase" evidence="2">
    <location>
        <begin position="290"/>
        <end position="291"/>
    </location>
</feature>
<feature type="site" description="Cleavage; by host signal peptidase" evidence="2">
    <location>
        <begin position="791"/>
        <end position="792"/>
    </location>
</feature>
<feature type="site" description="Cleavage; by host" evidence="2">
    <location>
        <begin position="1143"/>
        <end position="1144"/>
    </location>
</feature>
<feature type="site" description="Cleavage; by viral protease NS3" evidence="2 10">
    <location>
        <begin position="1374"/>
        <end position="1375"/>
    </location>
</feature>
<feature type="site" description="Cleavage; by autolysis" evidence="2">
    <location>
        <begin position="1505"/>
        <end position="1506"/>
    </location>
</feature>
<feature type="site" description="Involved in NS3 ATPase and RTPase activities" evidence="25">
    <location>
        <position position="1963"/>
    </location>
</feature>
<feature type="site" description="Involved in NS3 ATPase and RTPase activities" evidence="25">
    <location>
        <position position="1966"/>
    </location>
</feature>
<feature type="site" description="Cleavage; by autolysis" evidence="2">
    <location>
        <begin position="2124"/>
        <end position="2125"/>
    </location>
</feature>
<feature type="site" description="Cleavage; by viral protease NS3" evidence="2">
    <location>
        <begin position="2250"/>
        <end position="2251"/>
    </location>
</feature>
<feature type="site" description="Cleavage; by host signal peptidase" evidence="2">
    <location>
        <begin position="2273"/>
        <end position="2274"/>
    </location>
</feature>
<feature type="site" description="Cleavage; by viral protease NS3" evidence="10">
    <location>
        <begin position="2528"/>
        <end position="2529"/>
    </location>
</feature>
<feature type="site" description="mRNA cap binding" evidence="16">
    <location>
        <position position="2541"/>
    </location>
</feature>
<feature type="site" description="mRNA cap binding; via carbonyl oxygen" evidence="16">
    <location>
        <position position="2544"/>
    </location>
</feature>
<feature type="site" description="mRNA cap binding" evidence="16">
    <location>
        <position position="2545"/>
    </location>
</feature>
<feature type="site" description="mRNA cap binding; via carbonyl oxygen" evidence="16">
    <location>
        <position position="2547"/>
    </location>
</feature>
<feature type="site" description="mRNA cap binding" evidence="16">
    <location>
        <position position="2552"/>
    </location>
</feature>
<feature type="site" description="mRNA cap binding" evidence="16">
    <location>
        <position position="2556"/>
    </location>
</feature>
<feature type="site" description="Essential for 2'-O-methyltransferase activity" evidence="16">
    <location>
        <position position="2589"/>
    </location>
</feature>
<feature type="site" description="Essential for 2'-O-methyltransferase and N-7 methyltransferase activity" evidence="16">
    <location>
        <position position="2674"/>
    </location>
</feature>
<feature type="site" description="mRNA cap binding" evidence="16">
    <location>
        <position position="2678"/>
    </location>
</feature>
<feature type="site" description="Essential for 2'-O-methyltransferase activity" evidence="16">
    <location>
        <position position="2710"/>
    </location>
</feature>
<feature type="site" description="mRNA cap binding" evidence="16">
    <location>
        <position position="2741"/>
    </location>
</feature>
<feature type="site" description="mRNA cap binding" evidence="16">
    <location>
        <position position="2743"/>
    </location>
</feature>
<feature type="site" description="Essential for 2'-O-methyltransferase activity" evidence="16">
    <location>
        <position position="2746"/>
    </location>
</feature>
<feature type="modified residue" description="N6-acetyllysine; by host" evidence="7">
    <location>
        <position position="1894"/>
    </location>
</feature>
<feature type="modified residue" description="Phosphoserine" evidence="1">
    <location>
        <position position="2584"/>
    </location>
</feature>
<feature type="glycosylation site" description="N-linked (GlcNAc...) asparagine; by host" evidence="24">
    <location>
        <position position="138"/>
    </location>
</feature>
<feature type="glycosylation site" description="N-linked (GlcNAc...) asparagine; by host" evidence="9">
    <location>
        <position position="444"/>
    </location>
</feature>
<feature type="glycosylation site" description="N-linked (GlcNAc...) asparagine; by host" evidence="9">
    <location>
        <position position="921"/>
    </location>
</feature>
<feature type="glycosylation site" description="N-linked (GlcNAc...) asparagine; by host" evidence="9">
    <location>
        <position position="966"/>
    </location>
</feature>
<feature type="glycosylation site" description="N-linked (GlcNAc...) asparagine; by host" evidence="9">
    <location>
        <position position="998"/>
    </location>
</feature>
<feature type="disulfide bond" evidence="2">
    <location>
        <begin position="293"/>
        <end position="320"/>
    </location>
</feature>
<feature type="disulfide bond" evidence="2">
    <location>
        <begin position="350"/>
        <end position="406"/>
    </location>
</feature>
<feature type="disulfide bond" evidence="2">
    <location>
        <begin position="364"/>
        <end position="395"/>
    </location>
</feature>
<feature type="disulfide bond" evidence="2">
    <location>
        <begin position="382"/>
        <end position="411"/>
    </location>
</feature>
<feature type="disulfide bond" evidence="2">
    <location>
        <begin position="480"/>
        <end position="578"/>
    </location>
</feature>
<feature type="disulfide bond" evidence="2">
    <location>
        <begin position="595"/>
        <end position="626"/>
    </location>
</feature>
<feature type="disulfide bond" evidence="9">
    <location>
        <begin position="795"/>
        <end position="806"/>
    </location>
</feature>
<feature type="disulfide bond" evidence="9">
    <location>
        <begin position="846"/>
        <end position="934"/>
    </location>
</feature>
<feature type="disulfide bond" evidence="9">
    <location>
        <begin position="970"/>
        <end position="1014"/>
    </location>
</feature>
<feature type="disulfide bond" evidence="9">
    <location>
        <begin position="1071"/>
        <end position="1120"/>
    </location>
</feature>
<feature type="disulfide bond" evidence="9">
    <location>
        <begin position="1082"/>
        <end position="1103"/>
    </location>
</feature>
<feature type="disulfide bond" evidence="9">
    <location>
        <begin position="1104"/>
        <end position="1107"/>
    </location>
</feature>
<feature type="sequence variant" description="In strain: Infectious clone pAKUN and Infectious clone FLSDX.">
    <original>P</original>
    <variation>T</variation>
    <location>
        <position position="150"/>
    </location>
</feature>
<feature type="sequence variant" description="In strain: Infectious clone pAKUNa and Infectious clone FLSDX.">
    <original>I</original>
    <variation>M</variation>
    <location>
        <position position="820"/>
    </location>
</feature>
<feature type="sequence variant" description="In strain: Infectious clone pAKUN and Infectious clone FLSDX.">
    <original>N</original>
    <variation>S</variation>
    <location>
        <position position="943"/>
    </location>
</feature>
<feature type="sequence variant" description="In strain: Infectious clone pAKUN and Infectious clone FLSDX.">
    <original>P</original>
    <variation>L</variation>
    <location>
        <position position="1041"/>
    </location>
</feature>
<feature type="sequence variant" description="In strain: Infectious clone pAKUN; blocks induction of virus-specific membrane structures." evidence="26">
    <original>I</original>
    <variation>N</variation>
    <location>
        <position position="1202"/>
    </location>
</feature>
<feature type="sequence variant" description="In strain: Infectious clone pAKUN.">
    <original>R</original>
    <variation>K</variation>
    <location>
        <position position="1318"/>
    </location>
</feature>
<feature type="sequence variant" description="In strain: Infectious clone pAKUN and Infectious clone FLSDX.">
    <original>T</original>
    <variation>I</variation>
    <location>
        <position position="1967"/>
    </location>
</feature>
<feature type="sequence variant" description="In strain: Infectious clone pAKUN and Infectious clone FLSDX.">
    <original>A</original>
    <variation>V</variation>
    <location>
        <position position="1974"/>
    </location>
</feature>
<feature type="sequence variant" description="In strain: Infectious clone pAKUN.">
    <original>Y</original>
    <variation>H</variation>
    <location>
        <position position="2023"/>
    </location>
</feature>
<feature type="sequence variant" description="In strain: Infectious clone pAKUN.">
    <original>S</original>
    <variation>P</variation>
    <location>
        <position position="2062"/>
    </location>
</feature>
<feature type="sequence variant" description="In strain: Infectious clone pAKUN and Infectious clone FLSDX.">
    <original>T</original>
    <variation>N</variation>
    <location>
        <position position="2339"/>
    </location>
</feature>
<feature type="mutagenesis site" description="No effect on viral RNA replication and packaging; drastic increase in IFN-alpha and IFN-beta host cell response." evidence="18 21">
    <original>A</original>
    <variation>P</variation>
    <location>
        <position position="1173"/>
    </location>
</feature>
<feature type="mutagenesis site" description="28% decrease in viral RNA replication; decreased packaging efficiency." evidence="18">
    <original>N</original>
    <variation>D</variation>
    <location>
        <position position="1244"/>
    </location>
</feature>
<feature type="mutagenesis site" description="Restores induction of virus-specific membrane structures; when associated with N-1202." evidence="26">
    <original>T</original>
    <variation>P</variation>
    <location>
        <position position="1292"/>
    </location>
</feature>
<feature type="mutagenesis site" description="Complete loss of viral replication." evidence="29">
    <original>P</original>
    <variation>A</variation>
    <location>
        <position position="2137"/>
    </location>
</feature>
<feature type="mutagenesis site" description="Reduced membrane proliferation and efficiency of replication; no effect on replication complex formation." evidence="29">
    <original>P</original>
    <variation>A</variation>
    <location>
        <position position="2172"/>
    </location>
</feature>
<feature type="mutagenesis site" description="Slightly reduced membrane proliferation and efficiency of replication at early time of infection; no effect on replication complex formation." evidence="29">
    <original>D</original>
    <variation>A</variation>
    <location>
        <position position="2173"/>
    </location>
</feature>
<feature type="mutagenesis site" description="Reduced membrane proliferation and efficiency of replication; no effect on replication complex formation." evidence="29">
    <original>G</original>
    <variation>A</variation>
    <location>
        <position position="2190"/>
    </location>
</feature>
<feature type="mutagenesis site" description="Complete loss of viral replication." evidence="28">
    <original>P</original>
    <variation>A</variation>
    <location>
        <position position="2244"/>
    </location>
</feature>
<feature type="mutagenesis site" description="Complete loss of viral replication." evidence="28">
    <original>E</original>
    <variation>A</variation>
    <location>
        <position position="2245"/>
    </location>
</feature>
<feature type="mutagenesis site" description="20% decrease in viral replication." evidence="28">
    <original>P</original>
    <variation>A</variation>
    <location>
        <position position="2246"/>
    </location>
</feature>
<feature type="mutagenesis site" description="Complete loss of viral replication." evidence="28">
    <original>E</original>
    <variation>A</variation>
    <location>
        <position position="2247"/>
    </location>
</feature>
<feature type="mutagenesis site" description="88% decrease in viral RNA replication; decreased packaging efficiency." evidence="18">
    <original>P</original>
    <variation>S</variation>
    <location>
        <position position="2798"/>
    </location>
</feature>
<feature type="mutagenesis site" description="No effect on the subcellular localization of RNA-directed RNA polymerase NS5." evidence="30">
    <original>KY</original>
    <variation>AA</variation>
    <location>
        <begin position="2901"/>
        <end position="2902"/>
    </location>
</feature>
<feature type="mutagenesis site" description="Complete loss of nuclear localization of RNA-directed RNA polymerase NS5." evidence="30">
    <original>REK</original>
    <variation>AAA</variation>
    <location>
        <begin position="2917"/>
        <end position="2919"/>
    </location>
</feature>
<feature type="mutagenesis site" description="Increases STAT1 inhibitory function of NS5." evidence="27">
    <original>S</original>
    <variation>F</variation>
    <location>
        <position position="3181"/>
    </location>
</feature>
<feature type="helix" evidence="39">
    <location>
        <begin position="26"/>
        <end position="38"/>
    </location>
</feature>
<feature type="helix" evidence="39">
    <location>
        <begin position="44"/>
        <end position="56"/>
    </location>
</feature>
<feature type="helix" evidence="39">
    <location>
        <begin position="63"/>
        <end position="69"/>
    </location>
</feature>
<feature type="helix" evidence="39">
    <location>
        <begin position="74"/>
        <end position="95"/>
    </location>
</feature>
<feature type="strand" evidence="43">
    <location>
        <begin position="1694"/>
        <end position="1697"/>
    </location>
</feature>
<feature type="turn" evidence="43">
    <location>
        <begin position="1703"/>
        <end position="1708"/>
    </location>
</feature>
<feature type="helix" evidence="43">
    <location>
        <begin position="1709"/>
        <end position="1719"/>
    </location>
</feature>
<feature type="strand" evidence="43">
    <location>
        <begin position="1724"/>
        <end position="1730"/>
    </location>
</feature>
<feature type="helix" evidence="43">
    <location>
        <begin position="1731"/>
        <end position="1740"/>
    </location>
</feature>
<feature type="strand" evidence="43">
    <location>
        <begin position="1763"/>
        <end position="1767"/>
    </location>
</feature>
<feature type="helix" evidence="43">
    <location>
        <begin position="1768"/>
        <end position="1776"/>
    </location>
</feature>
<feature type="strand" evidence="43">
    <location>
        <begin position="1777"/>
        <end position="1779"/>
    </location>
</feature>
<feature type="strand" evidence="43">
    <location>
        <begin position="1785"/>
        <end position="1791"/>
    </location>
</feature>
<feature type="helix" evidence="43">
    <location>
        <begin position="1797"/>
        <end position="1811"/>
    </location>
</feature>
<feature type="strand" evidence="43">
    <location>
        <begin position="1816"/>
        <end position="1820"/>
    </location>
</feature>
<feature type="strand" evidence="43">
    <location>
        <begin position="1839"/>
        <end position="1842"/>
    </location>
</feature>
<feature type="strand" evidence="43">
    <location>
        <begin position="1851"/>
        <end position="1853"/>
    </location>
</feature>
<feature type="helix" evidence="43">
    <location>
        <begin position="1855"/>
        <end position="1859"/>
    </location>
</feature>
<feature type="strand" evidence="43">
    <location>
        <begin position="1864"/>
        <end position="1867"/>
    </location>
</feature>
<feature type="helix" evidence="43">
    <location>
        <begin position="1871"/>
        <end position="1883"/>
    </location>
</feature>
<feature type="strand" evidence="43">
    <location>
        <begin position="1888"/>
        <end position="1891"/>
    </location>
</feature>
<feature type="strand" evidence="43">
    <location>
        <begin position="1909"/>
        <end position="1914"/>
    </location>
</feature>
<feature type="strand" evidence="43">
    <location>
        <begin position="1926"/>
        <end position="1930"/>
    </location>
</feature>
<feature type="strand" evidence="43">
    <location>
        <begin position="1937"/>
        <end position="1944"/>
    </location>
</feature>
<feature type="strand" evidence="43">
    <location>
        <begin position="1946"/>
        <end position="1949"/>
    </location>
</feature>
<feature type="helix" evidence="43">
    <location>
        <begin position="1957"/>
        <end position="1964"/>
    </location>
</feature>
<feature type="strand" evidence="43">
    <location>
        <begin position="1977"/>
        <end position="1980"/>
    </location>
</feature>
<feature type="helix" evidence="43">
    <location>
        <begin position="1992"/>
        <end position="2002"/>
    </location>
</feature>
<feature type="helix" evidence="43">
    <location>
        <begin position="2007"/>
        <end position="2009"/>
    </location>
</feature>
<feature type="helix" evidence="43">
    <location>
        <begin position="2016"/>
        <end position="2021"/>
    </location>
</feature>
<feature type="turn" evidence="43">
    <location>
        <begin position="2026"/>
        <end position="2029"/>
    </location>
</feature>
<feature type="helix" evidence="43">
    <location>
        <begin position="2034"/>
        <end position="2044"/>
    </location>
</feature>
<feature type="helix" evidence="43">
    <location>
        <begin position="2050"/>
        <end position="2058"/>
    </location>
</feature>
<feature type="helix" evidence="43">
    <location>
        <begin position="2066"/>
        <end position="2069"/>
    </location>
</feature>
<feature type="helix" evidence="43">
    <location>
        <begin position="2074"/>
        <end position="2076"/>
    </location>
</feature>
<feature type="strand" evidence="43">
    <location>
        <begin position="2079"/>
        <end position="2084"/>
    </location>
</feature>
<feature type="strand" evidence="43">
    <location>
        <begin position="2086"/>
        <end position="2088"/>
    </location>
</feature>
<feature type="strand" evidence="43">
    <location>
        <begin position="2094"/>
        <end position="2096"/>
    </location>
</feature>
<feature type="strand" evidence="43">
    <location>
        <begin position="2100"/>
        <end position="2103"/>
    </location>
</feature>
<feature type="helix" evidence="43">
    <location>
        <begin position="2104"/>
        <end position="2106"/>
    </location>
</feature>
<feature type="helix" evidence="43">
    <location>
        <begin position="2110"/>
        <end position="2121"/>
    </location>
</feature>
<feature type="helix" evidence="42">
    <location>
        <begin position="2808"/>
        <end position="2815"/>
    </location>
</feature>
<feature type="turn" evidence="42">
    <location>
        <begin position="2819"/>
        <end position="2821"/>
    </location>
</feature>
<feature type="strand" evidence="42">
    <location>
        <begin position="2831"/>
        <end position="2840"/>
    </location>
</feature>
<feature type="helix" evidence="40">
    <location>
        <begin position="2853"/>
        <end position="2857"/>
    </location>
</feature>
<feature type="helix" evidence="40">
    <location>
        <begin position="2860"/>
        <end position="2862"/>
    </location>
</feature>
<feature type="turn" evidence="42">
    <location>
        <begin position="2870"/>
        <end position="2872"/>
    </location>
</feature>
<feature type="helix" evidence="42">
    <location>
        <begin position="2878"/>
        <end position="2885"/>
    </location>
</feature>
<feature type="helix" evidence="40">
    <location>
        <begin position="2898"/>
        <end position="2915"/>
    </location>
</feature>
<feature type="turn" evidence="40">
    <location>
        <begin position="2916"/>
        <end position="2918"/>
    </location>
</feature>
<feature type="helix" evidence="40">
    <location>
        <begin position="2926"/>
        <end position="2934"/>
    </location>
</feature>
<feature type="helix" evidence="40">
    <location>
        <begin position="2951"/>
        <end position="2957"/>
    </location>
</feature>
<feature type="helix" evidence="40">
    <location>
        <begin position="2959"/>
        <end position="2974"/>
    </location>
</feature>
<feature type="helix" evidence="40">
    <location>
        <begin position="3004"/>
        <end position="3019"/>
    </location>
</feature>
<feature type="helix" evidence="40">
    <location>
        <begin position="3021"/>
        <end position="3024"/>
    </location>
</feature>
<feature type="turn" evidence="40">
    <location>
        <begin position="3025"/>
        <end position="3028"/>
    </location>
</feature>
<feature type="helix" evidence="40">
    <location>
        <begin position="3030"/>
        <end position="3033"/>
    </location>
</feature>
<feature type="strand" evidence="40">
    <location>
        <begin position="3034"/>
        <end position="3036"/>
    </location>
</feature>
<feature type="helix" evidence="40">
    <location>
        <begin position="3042"/>
        <end position="3052"/>
    </location>
</feature>
<feature type="strand" evidence="40">
    <location>
        <begin position="3055"/>
        <end position="3058"/>
    </location>
</feature>
<feature type="strand" evidence="41">
    <location>
        <begin position="3065"/>
        <end position="3067"/>
    </location>
</feature>
<feature type="helix" evidence="40">
    <location>
        <begin position="3068"/>
        <end position="3070"/>
    </location>
</feature>
<feature type="helix" evidence="40">
    <location>
        <begin position="3074"/>
        <end position="3080"/>
    </location>
</feature>
<feature type="helix" evidence="40">
    <location>
        <begin position="3081"/>
        <end position="3086"/>
    </location>
</feature>
<feature type="helix" evidence="40">
    <location>
        <begin position="3089"/>
        <end position="3099"/>
    </location>
</feature>
<feature type="turn" evidence="40">
    <location>
        <begin position="3100"/>
        <end position="3103"/>
    </location>
</feature>
<feature type="strand" evidence="42">
    <location>
        <begin position="3104"/>
        <end position="3113"/>
    </location>
</feature>
<feature type="helix" evidence="42">
    <location>
        <begin position="3115"/>
        <end position="3117"/>
    </location>
</feature>
<feature type="strand" evidence="42">
    <location>
        <begin position="3119"/>
        <end position="3128"/>
    </location>
</feature>
<feature type="helix" evidence="40">
    <location>
        <begin position="3134"/>
        <end position="3156"/>
    </location>
</feature>
<feature type="strand" evidence="40">
    <location>
        <begin position="3164"/>
        <end position="3167"/>
    </location>
</feature>
<feature type="helix" evidence="40">
    <location>
        <begin position="3172"/>
        <end position="3188"/>
    </location>
</feature>
<feature type="strand" evidence="40">
    <location>
        <begin position="3191"/>
        <end position="3194"/>
    </location>
</feature>
<feature type="strand" evidence="40">
    <location>
        <begin position="3197"/>
        <end position="3200"/>
    </location>
</feature>
<feature type="helix" evidence="40">
    <location>
        <begin position="3205"/>
        <end position="3209"/>
    </location>
</feature>
<feature type="helix" evidence="40">
    <location>
        <begin position="3212"/>
        <end position="3216"/>
    </location>
</feature>
<feature type="turn" evidence="40">
    <location>
        <begin position="3236"/>
        <end position="3238"/>
    </location>
</feature>
<feature type="strand" evidence="40">
    <location>
        <begin position="3244"/>
        <end position="3250"/>
    </location>
</feature>
<feature type="strand" evidence="40">
    <location>
        <begin position="3256"/>
        <end position="3261"/>
    </location>
</feature>
<feature type="helix" evidence="40">
    <location>
        <begin position="3264"/>
        <end position="3271"/>
    </location>
</feature>
<feature type="strand" evidence="42">
    <location>
        <begin position="3275"/>
        <end position="3278"/>
    </location>
</feature>
<feature type="helix" evidence="40">
    <location>
        <begin position="3282"/>
        <end position="3298"/>
    </location>
</feature>
<feature type="helix" evidence="40">
    <location>
        <begin position="3303"/>
        <end position="3315"/>
    </location>
</feature>
<feature type="strand" evidence="40">
    <location>
        <begin position="3338"/>
        <end position="3340"/>
    </location>
</feature>
<feature type="helix" evidence="40">
    <location>
        <begin position="3342"/>
        <end position="3350"/>
    </location>
</feature>
<feature type="turn" evidence="40">
    <location>
        <begin position="3351"/>
        <end position="3353"/>
    </location>
</feature>
<feature type="helix" evidence="40">
    <location>
        <begin position="3366"/>
        <end position="3368"/>
    </location>
</feature>
<feature type="helix" evidence="40">
    <location>
        <begin position="3374"/>
        <end position="3379"/>
    </location>
</feature>
<feature type="helix" evidence="40">
    <location>
        <begin position="3387"/>
        <end position="3394"/>
    </location>
</feature>
<feature type="helix" evidence="40">
    <location>
        <begin position="3396"/>
        <end position="3407"/>
    </location>
</feature>
<feature type="helix" evidence="40">
    <location>
        <begin position="3416"/>
        <end position="3418"/>
    </location>
</feature>
<protein>
    <recommendedName>
        <fullName>Genome polyprotein</fullName>
    </recommendedName>
    <component>
        <recommendedName>
            <fullName>Peptide 2k</fullName>
        </recommendedName>
    </component>
    <component>
        <recommendedName>
            <fullName>Capsid protein C</fullName>
        </recommendedName>
        <alternativeName>
            <fullName>Core protein</fullName>
        </alternativeName>
    </component>
    <component>
        <recommendedName>
            <fullName>Protein prM</fullName>
        </recommendedName>
    </component>
    <component>
        <recommendedName>
            <fullName>Peptide pr</fullName>
        </recommendedName>
    </component>
    <component>
        <recommendedName>
            <fullName>Small envelope protein M</fullName>
        </recommendedName>
        <alternativeName>
            <fullName>Matrix protein</fullName>
        </alternativeName>
    </component>
    <component>
        <recommendedName>
            <fullName>Envelope protein E</fullName>
        </recommendedName>
    </component>
    <component>
        <recommendedName>
            <fullName>Non-structural protein 1</fullName>
            <shortName>NS1</shortName>
        </recommendedName>
    </component>
    <component>
        <recommendedName>
            <fullName>Non-structural protein 2A</fullName>
            <shortName>NS2A</shortName>
        </recommendedName>
    </component>
    <component>
        <recommendedName>
            <fullName>Serine protease subunit NS2B</fullName>
        </recommendedName>
        <alternativeName>
            <fullName>Flavivirin protease NS2B regulatory subunit</fullName>
        </alternativeName>
        <alternativeName>
            <fullName>Non-structural protein 2B</fullName>
        </alternativeName>
    </component>
    <component>
        <recommendedName>
            <fullName>Serine protease/Helicase NS3</fullName>
            <ecNumber>3.4.21.91</ecNumber>
            <ecNumber>3.6.1.15</ecNumber>
            <ecNumber evidence="25">3.6.4.13</ecNumber>
        </recommendedName>
        <alternativeName>
            <fullName>Flavivirin protease NS3 catalytic subunit</fullName>
        </alternativeName>
        <alternativeName>
            <fullName>Non-structural protein 3</fullName>
        </alternativeName>
    </component>
    <component>
        <recommendedName>
            <fullName>Non-structural protein 4A</fullName>
            <shortName>NS4A</shortName>
        </recommendedName>
    </component>
    <component>
        <recommendedName>
            <fullName>Non-structural protein 4B</fullName>
            <shortName>NS4B</shortName>
        </recommendedName>
    </component>
    <component>
        <recommendedName>
            <fullName>RNA-directed RNA polymerase NS5</fullName>
            <ecNumber evidence="16">2.1.1.56</ecNumber>
            <ecNumber evidence="16">2.1.1.57</ecNumber>
            <ecNumber evidence="11">2.7.7.48</ecNumber>
        </recommendedName>
        <alternativeName>
            <fullName>NS5</fullName>
        </alternativeName>
    </component>
</protein>
<comment type="function">
    <molecule>Capsid protein C</molecule>
    <text evidence="5">Plays a role in virus budding by binding to the cell membrane and gathering the viral RNA into a nucleocapsid that forms the core of a mature virus particle. During virus entry, may induce genome penetration into the host cytoplasm after hemifusion induced by the surface proteins. Can migrate to the cell nucleus where it modulates host functions. Overcomes the anti-viral effects of host EXOC1 by sequestering and degrading the latter through the proteasome degradation pathway.</text>
</comment>
<comment type="function">
    <molecule>Capsid protein C</molecule>
    <text evidence="1">Inhibits RNA silencing by interfering with host Dicer.</text>
</comment>
<comment type="function">
    <molecule>Peptide pr</molecule>
    <text evidence="5">Prevents premature fusion activity of envelope proteins in trans-Golgi by binding to envelope protein E at pH6.0. After virion release in extracellular space, gets dissociated from E dimers.</text>
</comment>
<comment type="function">
    <molecule>Protein prM</molecule>
    <text evidence="5">Acts as a chaperone for envelope protein E during intracellular virion assembly by masking and inactivating envelope protein E fusion peptide. prM is the only viral peptide matured by host furin in the trans-Golgi network probably to avoid catastrophic activation of the viral fusion activity in acidic Golgi compartment prior to virion release. prM-E cleavage is inefficient, and many virions are only partially matured. These uncleaved prM would play a role in immune evasion.</text>
</comment>
<comment type="function">
    <molecule>Small envelope protein M</molecule>
    <text evidence="5">May play a role in virus budding. Exerts cytotoxic effects by activating a mitochondrial apoptotic pathway through M ectodomain. May display a viroporin activity.</text>
</comment>
<comment type="function">
    <molecule>Envelope protein E</molecule>
    <text evidence="5">Binds to host cell surface receptor and mediates fusion between viral and cellular membranes. Envelope protein is synthesized in the endoplasmic reticulum in the form of heterodimer with protein prM. They play a role in virion budding in the ER, and the newly formed immature particle is covered with 60 spikes composed of heterodimer between precursor prM and envelope protein E. The virion is transported to the Golgi apparatus where the low pH causes dissociation of PrM-E heterodimers and formation of E homodimers. prM-E cleavage is inefficient, and many virions are only partially matured. These uncleaved prM would play a role in immune evasion.</text>
</comment>
<comment type="function">
    <molecule>Non-structural protein 1</molecule>
    <text evidence="9">Involved in immune evasion, pathogenesis and viral replication. Once cleaved off the polyprotein, is targeted to three destinations: the viral replication cycle, the plasma membrane and the extracellular compartment. Essential for viral replication. Required for formation of the replication complex and recruitment of other non-structural proteins to the ER-derived membrane structures. Excreted as a hexameric lipoparticle that plays a role against host immune response. Antagonizing the complement function. Binds to the host macrophages and dendritic cells. Inhibits signal transduction originating from Toll-like receptor 3 (TLR3).</text>
</comment>
<comment type="function">
    <molecule>Non-structural protein 2A</molecule>
    <text evidence="18 20 26">Component of the viral RNA replication complex that functions in virion assembly and antagonizes the host alpha/beta interferon antiviral response (PubMed:15507609, PubMed:18337583). Inhibits STAT2 translocation in the nucleus after IFN-alpha treatment (PubMed:15650219).</text>
</comment>
<comment type="function">
    <molecule>Serine protease subunit NS2B</molecule>
    <text evidence="5 14 20">Required cofactor for the serine protease function of NS3. May have membrane-destabilizing activity and form viroporins (By similarity). Inhibits STAT2 translocation in the nucleus after IFN-alpha treatment (PubMed:15650219).</text>
</comment>
<comment type="function">
    <molecule>Serine protease/Helicase NS3</molecule>
    <text evidence="9 15 20">Displays three enzymatic activities: serine protease, NTPase and RNA helicase. NS3 serine protease, in association with NS2B, performs its autocleavage and cleaves the polyprotein at dibasic sites in the cytoplasm: C-prM, NS2A-NS2B, NS2B-NS3, NS3-NS4A, NS4A-2K and NS4B-NS5. NS3 RNA helicase binds RNA and unwinds dsRNA in the 3' to 5' direction (By similarity). NS3 supports the separation of RNA daughter and template strands during viral replication. The helicase part is involved in the inhibition of phosphorylation of host STAT1, and thereby inhibition of host type-I IFN signaling (By similarity). In addition, NS3 assists the initiation of replication by unwinding the RNA secondary structure in the 3' non-translated region (NTR). Inhibits STAT2 translocation in the nucleus after IFN-alpha treatment (PubMed:15650219).</text>
</comment>
<comment type="function">
    <molecule>Non-structural protein 4A</molecule>
    <text evidence="9 20 22 29">Regulates the ATPase activity of the NS3 helicase activity (By similarity). NS4A allows NS3 helicase to conserve energy during unwinding (By similarity). Induces host ER membrane rearrangements to provide a compartment where viral replication can take part (PubMed:16611922, PubMed:25771497). Inhibits STAT2 translocation in the nucleus after IFN-alpha treatment (PubMed:15650219).</text>
</comment>
<comment type="function">
    <molecule>Peptide 2k</molecule>
    <text evidence="5">Functions as a signal peptide for NS4B and is required for the interferon antagonism activity of the latter.</text>
</comment>
<comment type="function">
    <molecule>Non-structural protein 4B</molecule>
    <text evidence="9 20">Induces the formation of ER-derived membrane vesicles where the viral replication takes place (By similarity). Inhibits interferon (IFN)-induced host STAT1 phosphorylation and nuclear translocation, thereby preventing the establishment of cellular antiviral state by blocking the IFN-alpha/beta pathway (PubMed:15650219). Inhibits STAT2 translocation in the nucleus after IFN-alpha treatment (PubMed:15650219).</text>
</comment>
<comment type="function">
    <molecule>RNA-directed RNA polymerase NS5</molecule>
    <text evidence="9 19 27 31">Replicates the viral (+) and (-) genome, and performs the capping of genomes in the cytoplasm (By similarity). NS5 methylates viral RNA cap at guanine N-7 and ribose 2'-O positions (By similarity). Besides its role in genome replication, also prevents the establishment of cellular antiviral state by blocking the interferon-alpha/beta (IFN-alpha/beta) signaling pathway (PubMed:15650160, PubMed:20106931). Inhibits host JAK1 and TYK2 phosphorylation, thereby preventing activation of JAK-STAT signaling pathway (PubMed:15650160). May transcriptionally regulate host genes involved in antiviral response when localized in the nucleus (PubMed:33866234).</text>
</comment>
<comment type="catalytic activity">
    <reaction>
        <text>Selective hydrolysis of -Xaa-Xaa-|-Yaa- bonds in which each of the Xaa can be either Arg or Lys and Yaa can be either Ser or Ala.</text>
        <dbReference type="EC" id="3.4.21.91"/>
    </reaction>
</comment>
<comment type="catalytic activity">
    <reaction evidence="11">
        <text>RNA(n) + a ribonucleoside 5'-triphosphate = RNA(n+1) + diphosphate</text>
        <dbReference type="Rhea" id="RHEA:21248"/>
        <dbReference type="Rhea" id="RHEA-COMP:14527"/>
        <dbReference type="Rhea" id="RHEA-COMP:17342"/>
        <dbReference type="ChEBI" id="CHEBI:33019"/>
        <dbReference type="ChEBI" id="CHEBI:61557"/>
        <dbReference type="ChEBI" id="CHEBI:140395"/>
        <dbReference type="EC" id="2.7.7.48"/>
    </reaction>
</comment>
<comment type="catalytic activity">
    <reaction>
        <text>a ribonucleoside 5'-triphosphate + H2O = a ribonucleoside 5'-diphosphate + phosphate + H(+)</text>
        <dbReference type="Rhea" id="RHEA:23680"/>
        <dbReference type="ChEBI" id="CHEBI:15377"/>
        <dbReference type="ChEBI" id="CHEBI:15378"/>
        <dbReference type="ChEBI" id="CHEBI:43474"/>
        <dbReference type="ChEBI" id="CHEBI:57930"/>
        <dbReference type="ChEBI" id="CHEBI:61557"/>
        <dbReference type="EC" id="3.6.1.15"/>
    </reaction>
</comment>
<comment type="catalytic activity">
    <reaction evidence="25">
        <text>ATP + H2O = ADP + phosphate + H(+)</text>
        <dbReference type="Rhea" id="RHEA:13065"/>
        <dbReference type="ChEBI" id="CHEBI:15377"/>
        <dbReference type="ChEBI" id="CHEBI:15378"/>
        <dbReference type="ChEBI" id="CHEBI:30616"/>
        <dbReference type="ChEBI" id="CHEBI:43474"/>
        <dbReference type="ChEBI" id="CHEBI:456216"/>
        <dbReference type="EC" id="3.6.4.13"/>
    </reaction>
</comment>
<comment type="catalytic activity">
    <reaction evidence="16">
        <text>a 5'-end (5'-triphosphoguanosine)-ribonucleoside in mRNA + S-adenosyl-L-methionine = a 5'-end (N(7)-methyl 5'-triphosphoguanosine)-ribonucleoside in mRNA + S-adenosyl-L-homocysteine</text>
        <dbReference type="Rhea" id="RHEA:67008"/>
        <dbReference type="Rhea" id="RHEA-COMP:17166"/>
        <dbReference type="Rhea" id="RHEA-COMP:17167"/>
        <dbReference type="ChEBI" id="CHEBI:57856"/>
        <dbReference type="ChEBI" id="CHEBI:59789"/>
        <dbReference type="ChEBI" id="CHEBI:156461"/>
        <dbReference type="ChEBI" id="CHEBI:167617"/>
        <dbReference type="EC" id="2.1.1.56"/>
    </reaction>
</comment>
<comment type="catalytic activity">
    <reaction evidence="16">
        <text>a 5'-end (N(7)-methyl 5'-triphosphoguanosine)-ribonucleoside in mRNA + S-adenosyl-L-methionine = a 5'-end (N(7)-methyl 5'-triphosphoguanosine)-(2'-O-methyl-ribonucleoside) in mRNA + S-adenosyl-L-homocysteine + H(+)</text>
        <dbReference type="Rhea" id="RHEA:67020"/>
        <dbReference type="Rhea" id="RHEA-COMP:17167"/>
        <dbReference type="Rhea" id="RHEA-COMP:17168"/>
        <dbReference type="ChEBI" id="CHEBI:15378"/>
        <dbReference type="ChEBI" id="CHEBI:57856"/>
        <dbReference type="ChEBI" id="CHEBI:59789"/>
        <dbReference type="ChEBI" id="CHEBI:156461"/>
        <dbReference type="ChEBI" id="CHEBI:167609"/>
        <dbReference type="EC" id="2.1.1.57"/>
    </reaction>
</comment>
<comment type="subunit">
    <molecule>Capsid protein C</molecule>
    <text evidence="5 17">Homodimer; further assembles as a homotetramer (PubMed:15242592). Interacts (via N-terminus) with host EXOC1 (via C-terminus); this interaction results in EXOC1 degradation through the proteasome degradation pathway (By similarity).</text>
</comment>
<comment type="subunit">
    <molecule>Protein prM</molecule>
    <text evidence="5">Forms heterodimers with envelope protein E in the endoplasmic reticulum and Golgi.</text>
</comment>
<comment type="subunit">
    <molecule>Envelope protein E</molecule>
    <text evidence="5">Homodimer; in the endoplasmic reticulum and Golgi (By similarity). Interacts with protein prM (By similarity). Interacts with non-structural protein 1 (By similarity).</text>
</comment>
<comment type="subunit">
    <molecule>Non-structural protein 1</molecule>
    <text evidence="9">Homodimer; Homohexamer when secreted (By similarity). Interacts with envelope protein E (By similarity). NS1 interacts with NS4B (By similarity). Interacts with host complement protein CFH; this interaction leads to the degradation of C3 (By similarity).</text>
</comment>
<comment type="subunit">
    <molecule>Non-structural protein 2A</molecule>
    <text evidence="1">Interacts (via N-terminus) with serine protease NS3.</text>
</comment>
<comment type="subunit">
    <molecule>Serine protease subunit NS2B</molecule>
    <text evidence="5">Forms a heterodimer with serine protease NS3 (By similarity). May form homooligomers (By similarity).</text>
</comment>
<comment type="subunit">
    <molecule>Serine protease/Helicase NS3</molecule>
    <text evidence="5">Forms a heterodimer with NS2B (By similarity). Interacts with non-structural protein 2A (via N-terminus) (By similarity). Interacts with NS4B (By similarity). Interacts with unphosphorylated RNA-directed RNA polymerase NS5; this interaction stimulates RNA-directed RNA polymerase NS5 guanylyltransferase activity (By similarity).</text>
</comment>
<comment type="subunit">
    <molecule>Non-structural protein 4B</molecule>
    <text evidence="5 9">Interacts with Serine protease/Helicase NS3 (By similarity). Interacts with NS1 (By similarity).</text>
</comment>
<comment type="subunit">
    <molecule>RNA-directed RNA polymerase NS5</molecule>
    <text evidence="5">Homodimer. Interacts with host STAT2; this interaction inhibits the phosphorylation of the latter, and, when all viral proteins are present (polyprotein), targets STAT2 for degradation. Interacts with serine protease NS3.</text>
</comment>
<comment type="subcellular location">
    <molecule>Capsid protein C</molecule>
    <subcellularLocation>
        <location evidence="5">Virion</location>
    </subcellularLocation>
    <subcellularLocation>
        <location evidence="5">Host nucleus</location>
    </subcellularLocation>
    <subcellularLocation>
        <location evidence="2">Host cytoplasm</location>
    </subcellularLocation>
    <subcellularLocation>
        <location evidence="2">Host cytoplasm</location>
        <location evidence="2">Host perinuclear region</location>
    </subcellularLocation>
</comment>
<comment type="subcellular location">
    <molecule>Peptide pr</molecule>
    <subcellularLocation>
        <location evidence="5">Secreted</location>
    </subcellularLocation>
</comment>
<comment type="subcellular location">
    <molecule>Small envelope protein M</molecule>
    <subcellularLocation>
        <location evidence="1">Virion membrane</location>
        <topology evidence="1">Multi-pass membrane protein</topology>
    </subcellularLocation>
    <subcellularLocation>
        <location evidence="1">Host endoplasmic reticulum membrane</location>
        <topology evidence="10">Multi-pass membrane protein</topology>
    </subcellularLocation>
    <text evidence="1">ER membrane retention is mediated by the transmembrane domains.</text>
</comment>
<comment type="subcellular location">
    <molecule>Envelope protein E</molecule>
    <subcellularLocation>
        <location evidence="24">Virion membrane</location>
        <topology evidence="1">Multi-pass membrane protein</topology>
    </subcellularLocation>
    <subcellularLocation>
        <location evidence="1">Host endoplasmic reticulum membrane</location>
        <topology evidence="10">Multi-pass membrane protein</topology>
    </subcellularLocation>
    <text evidence="1">ER membrane retention is mediated by the transmembrane domains.</text>
</comment>
<comment type="subcellular location">
    <molecule>Non-structural protein 1</molecule>
    <subcellularLocation>
        <location evidence="5">Secreted</location>
    </subcellularLocation>
    <subcellularLocation>
        <location>Host endoplasmic reticulum membrane</location>
        <topology>Peripheral membrane protein</topology>
        <orientation evidence="5">Lumenal side</orientation>
    </subcellularLocation>
    <text evidence="9">Located in RE-derived vesicles hosting the replication complex.</text>
</comment>
<comment type="subcellular location">
    <molecule>Non-structural protein 2A</molecule>
    <subcellularLocation>
        <location evidence="32">Host endoplasmic reticulum membrane</location>
        <topology evidence="5">Multi-pass membrane protein</topology>
    </subcellularLocation>
</comment>
<comment type="subcellular location">
    <molecule>Serine protease subunit NS2B</molecule>
    <subcellularLocation>
        <location>Host endoplasmic reticulum membrane</location>
        <topology evidence="5">Multi-pass membrane protein</topology>
    </subcellularLocation>
</comment>
<comment type="subcellular location">
    <molecule>Serine protease/Helicase NS3</molecule>
    <subcellularLocation>
        <location evidence="15">Host endoplasmic reticulum membrane</location>
        <topology evidence="15">Peripheral membrane protein</topology>
        <orientation evidence="15">Cytoplasmic side</orientation>
    </subcellularLocation>
    <text evidence="15">Remains non-covalently associated to serine protease subunit NS2B.</text>
</comment>
<comment type="subcellular location">
    <molecule>Non-structural protein 4A</molecule>
    <subcellularLocation>
        <location evidence="32">Host endoplasmic reticulum membrane</location>
        <topology evidence="5">Multi-pass membrane protein</topology>
    </subcellularLocation>
    <text evidence="5">Located in RE-associated vesicles hosting the replication complex.</text>
</comment>
<comment type="subcellular location">
    <molecule>Non-structural protein 4B</molecule>
    <subcellularLocation>
        <location evidence="5">Host endoplasmic reticulum membrane</location>
        <topology evidence="5">Multi-pass membrane protein</topology>
    </subcellularLocation>
    <text evidence="9">Located in RE-derived vesicles hosting the replication complex.</text>
</comment>
<comment type="subcellular location">
    <molecule>RNA-directed RNA polymerase NS5</molecule>
    <subcellularLocation>
        <location>Host endoplasmic reticulum membrane</location>
        <topology>Peripheral membrane protein</topology>
        <orientation>Cytoplasmic side</orientation>
    </subcellularLocation>
    <subcellularLocation>
        <location evidence="30">Host nucleus</location>
    </subcellularLocation>
    <subcellularLocation>
        <location evidence="30">Host cytoplasm</location>
    </subcellularLocation>
    <text evidence="5 30">Located in RE-associated vesicles hosting the replication complex. NS5 protein is mainly localized in the nucleus rather than in ER vesicles (By similarity). Shuttles between the cytoplasm and nucleus (PubMed:29582535).</text>
</comment>
<comment type="domain">
    <molecule>Small envelope protein M</molecule>
    <text evidence="5">The transmembrane domains contain an endoplasmic reticulum retention signal.</text>
</comment>
<comment type="domain">
    <molecule>Envelope protein E</molecule>
    <text evidence="5">The transmembrane domains contain an endoplasmic reticulum retention signal.</text>
</comment>
<comment type="domain">
    <molecule>RNA-directed RNA polymerase NS5</molecule>
    <text evidence="2">Contains a PDZ-binding motif that binds to several PDZ-containing cellular proteins. These interactions seem necessary for an optimal viral replication.</text>
</comment>
<comment type="PTM">
    <molecule>Genome polyprotein</molecule>
    <text evidence="5">Specific enzymatic cleavages in vivo yield mature proteins. Cleavages in the lumen of endoplasmic reticulum are performed by host signal peptidase, whereas cleavages in the cytoplasmic side are performed by serine protease NS3. Signal cleavage at the 2K-4B site requires a prior NS3 protease-mediated cleavage at the 4A-2K site.</text>
</comment>
<comment type="PTM">
    <molecule>Protein prM</molecule>
    <text evidence="5">Cleaved in post-Golgi vesicles by a host furin, releasing the mature small envelope protein M, and peptide pr. This cleavage is incomplete as up to 30% of viral particles still carry uncleaved prM.</text>
</comment>
<comment type="PTM">
    <molecule>Envelope protein E</molecule>
    <text evidence="24">N-glycosylated.</text>
</comment>
<comment type="PTM">
    <molecule>Non-structural protein 1</molecule>
    <text evidence="5">N-glycosylated. The excreted form is glycosylated and this is required for efficient secretion of the protein from infected cells.</text>
</comment>
<comment type="PTM">
    <molecule>Serine protease/Helicase NS3</molecule>
    <text evidence="7">Acetylated by host KAT5. Acetylation modulates NS3 RNA-binding and unwinding activities and plays an important positive role for viral replication.</text>
</comment>
<comment type="PTM">
    <molecule>RNA-directed RNA polymerase NS5</molecule>
    <text evidence="5">Phosphorylated on serines residues. This phosphorylation may trigger NS5 nuclear localization.</text>
</comment>
<comment type="similarity">
    <text evidence="16">In the N-terminal section; belongs to the class I-like SAM-binding methyltransferase superfamily. mRNA cap 0-1 NS5-type methyltransferase family.</text>
</comment>
<evidence type="ECO:0000250" key="1">
    <source>
        <dbReference type="UniProtKB" id="P03314"/>
    </source>
</evidence>
<evidence type="ECO:0000250" key="2">
    <source>
        <dbReference type="UniProtKB" id="P06935"/>
    </source>
</evidence>
<evidence type="ECO:0000250" key="3">
    <source>
        <dbReference type="UniProtKB" id="P14336"/>
    </source>
</evidence>
<evidence type="ECO:0000250" key="4">
    <source>
        <dbReference type="UniProtKB" id="P14340"/>
    </source>
</evidence>
<evidence type="ECO:0000250" key="5">
    <source>
        <dbReference type="UniProtKB" id="P17763"/>
    </source>
</evidence>
<evidence type="ECO:0000250" key="6">
    <source>
        <dbReference type="UniProtKB" id="P29990"/>
    </source>
</evidence>
<evidence type="ECO:0000250" key="7">
    <source>
        <dbReference type="UniProtKB" id="Q32ZE1"/>
    </source>
</evidence>
<evidence type="ECO:0000250" key="8">
    <source>
        <dbReference type="UniProtKB" id="Q6YMS4"/>
    </source>
</evidence>
<evidence type="ECO:0000250" key="9">
    <source>
        <dbReference type="UniProtKB" id="Q9Q6P4"/>
    </source>
</evidence>
<evidence type="ECO:0000255" key="10"/>
<evidence type="ECO:0000255" key="11">
    <source>
        <dbReference type="PROSITE-ProRule" id="PRU00539"/>
    </source>
</evidence>
<evidence type="ECO:0000255" key="12">
    <source>
        <dbReference type="PROSITE-ProRule" id="PRU00541"/>
    </source>
</evidence>
<evidence type="ECO:0000255" key="13">
    <source>
        <dbReference type="PROSITE-ProRule" id="PRU00542"/>
    </source>
</evidence>
<evidence type="ECO:0000255" key="14">
    <source>
        <dbReference type="PROSITE-ProRule" id="PRU00859"/>
    </source>
</evidence>
<evidence type="ECO:0000255" key="15">
    <source>
        <dbReference type="PROSITE-ProRule" id="PRU00860"/>
    </source>
</evidence>
<evidence type="ECO:0000255" key="16">
    <source>
        <dbReference type="PROSITE-ProRule" id="PRU00924"/>
    </source>
</evidence>
<evidence type="ECO:0000269" key="17">
    <source>
    </source>
</evidence>
<evidence type="ECO:0000269" key="18">
    <source>
    </source>
</evidence>
<evidence type="ECO:0000269" key="19">
    <source>
    </source>
</evidence>
<evidence type="ECO:0000269" key="20">
    <source>
    </source>
</evidence>
<evidence type="ECO:0000269" key="21">
    <source>
    </source>
</evidence>
<evidence type="ECO:0000269" key="22">
    <source>
    </source>
</evidence>
<evidence type="ECO:0000269" key="23">
    <source>
    </source>
</evidence>
<evidence type="ECO:0000269" key="24">
    <source>
    </source>
</evidence>
<evidence type="ECO:0000269" key="25">
    <source>
    </source>
</evidence>
<evidence type="ECO:0000269" key="26">
    <source>
    </source>
</evidence>
<evidence type="ECO:0000269" key="27">
    <source>
    </source>
</evidence>
<evidence type="ECO:0000269" key="28">
    <source>
    </source>
</evidence>
<evidence type="ECO:0000269" key="29">
    <source>
    </source>
</evidence>
<evidence type="ECO:0000269" key="30">
    <source>
    </source>
</evidence>
<evidence type="ECO:0000269" key="31">
    <source>
    </source>
</evidence>
<evidence type="ECO:0000269" key="32">
    <source>
    </source>
</evidence>
<evidence type="ECO:0000305" key="33"/>
<evidence type="ECO:0007744" key="34">
    <source>
        <dbReference type="PDB" id="2HCN"/>
    </source>
</evidence>
<evidence type="ECO:0007744" key="35">
    <source>
        <dbReference type="PDB" id="2HCS"/>
    </source>
</evidence>
<evidence type="ECO:0007744" key="36">
    <source>
        <dbReference type="PDB" id="2HFZ"/>
    </source>
</evidence>
<evidence type="ECO:0007744" key="37">
    <source>
        <dbReference type="PDB" id="2OF6"/>
    </source>
</evidence>
<evidence type="ECO:0007744" key="38">
    <source>
        <dbReference type="PDB" id="2QEQ"/>
    </source>
</evidence>
<evidence type="ECO:0007829" key="39">
    <source>
        <dbReference type="PDB" id="1SFK"/>
    </source>
</evidence>
<evidence type="ECO:0007829" key="40">
    <source>
        <dbReference type="PDB" id="2HCN"/>
    </source>
</evidence>
<evidence type="ECO:0007829" key="41">
    <source>
        <dbReference type="PDB" id="2HCS"/>
    </source>
</evidence>
<evidence type="ECO:0007829" key="42">
    <source>
        <dbReference type="PDB" id="2HFZ"/>
    </source>
</evidence>
<evidence type="ECO:0007829" key="43">
    <source>
        <dbReference type="PDB" id="2QEQ"/>
    </source>
</evidence>
<proteinExistence type="evidence at protein level"/>
<dbReference type="EC" id="3.4.21.91"/>
<dbReference type="EC" id="3.6.1.15"/>
<dbReference type="EC" id="3.6.4.13" evidence="25"/>
<dbReference type="EC" id="2.1.1.56" evidence="16"/>
<dbReference type="EC" id="2.1.1.57" evidence="16"/>
<dbReference type="EC" id="2.7.7.48" evidence="11"/>
<dbReference type="EMBL" id="D00246">
    <property type="protein sequence ID" value="BAA00176.1"/>
    <property type="molecule type" value="Genomic_RNA"/>
</dbReference>
<dbReference type="EMBL" id="AY274504">
    <property type="protein sequence ID" value="AAP78941.1"/>
    <property type="molecule type" value="Genomic_RNA"/>
</dbReference>
<dbReference type="EMBL" id="AY274505">
    <property type="protein sequence ID" value="AAP78942.1"/>
    <property type="molecule type" value="Genomic_RNA"/>
</dbReference>
<dbReference type="PIR" id="A28697">
    <property type="entry name" value="GNWVKV"/>
</dbReference>
<dbReference type="PDB" id="1SFK">
    <property type="method" value="X-ray"/>
    <property type="resolution" value="3.20 A"/>
    <property type="chains" value="A/B/C/D/E/F/G/H=23-98"/>
</dbReference>
<dbReference type="PDB" id="2HCN">
    <property type="method" value="X-ray"/>
    <property type="resolution" value="2.35 A"/>
    <property type="chains" value="A=2846-3433"/>
</dbReference>
<dbReference type="PDB" id="2HCS">
    <property type="method" value="X-ray"/>
    <property type="resolution" value="2.50 A"/>
    <property type="chains" value="A=2846-3433"/>
</dbReference>
<dbReference type="PDB" id="2HFZ">
    <property type="method" value="X-ray"/>
    <property type="resolution" value="3.00 A"/>
    <property type="chains" value="A=2802-3433"/>
</dbReference>
<dbReference type="PDB" id="2OF6">
    <property type="method" value="EM"/>
    <property type="resolution" value="24.00 A"/>
    <property type="chains" value="A/B/C=291-690"/>
</dbReference>
<dbReference type="PDB" id="2QEQ">
    <property type="method" value="X-ray"/>
    <property type="resolution" value="3.10 A"/>
    <property type="chains" value="A/B=1691-2124"/>
</dbReference>
<dbReference type="PDBsum" id="1SFK"/>
<dbReference type="PDBsum" id="2HCN"/>
<dbReference type="PDBsum" id="2HCS"/>
<dbReference type="PDBsum" id="2HFZ"/>
<dbReference type="PDBsum" id="2OF6"/>
<dbReference type="PDBsum" id="2QEQ"/>
<dbReference type="SMR" id="P14335"/>
<dbReference type="IntAct" id="P14335">
    <property type="interactions" value="37"/>
</dbReference>
<dbReference type="MEROPS" id="S07.003"/>
<dbReference type="TCDB" id="1.G.3.1.7">
    <property type="family name" value="the viral pore-forming membrane fusion protein-3 (vmfp3) family"/>
</dbReference>
<dbReference type="iPTMnet" id="P14335"/>
<dbReference type="PeptideAtlas" id="P14335"/>
<dbReference type="BRENDA" id="3.4.21.91">
    <property type="organism ID" value="2834"/>
</dbReference>
<dbReference type="BRENDA" id="3.6.4.13">
    <property type="organism ID" value="2834"/>
</dbReference>
<dbReference type="EvolutionaryTrace" id="P14335"/>
<dbReference type="Proteomes" id="UP000008379">
    <property type="component" value="Segment"/>
</dbReference>
<dbReference type="Proteomes" id="UP000099558">
    <property type="component" value="Genome"/>
</dbReference>
<dbReference type="Proteomes" id="UP000138183">
    <property type="component" value="Genome"/>
</dbReference>
<dbReference type="GO" id="GO:0005576">
    <property type="term" value="C:extracellular region"/>
    <property type="evidence" value="ECO:0007669"/>
    <property type="project" value="UniProtKB-SubCell"/>
</dbReference>
<dbReference type="GO" id="GO:0044167">
    <property type="term" value="C:host cell endoplasmic reticulum membrane"/>
    <property type="evidence" value="ECO:0007669"/>
    <property type="project" value="UniProtKB-SubCell"/>
</dbReference>
<dbReference type="GO" id="GO:0042025">
    <property type="term" value="C:host cell nucleus"/>
    <property type="evidence" value="ECO:0007669"/>
    <property type="project" value="UniProtKB-SubCell"/>
</dbReference>
<dbReference type="GO" id="GO:0044220">
    <property type="term" value="C:host cell perinuclear region of cytoplasm"/>
    <property type="evidence" value="ECO:0007669"/>
    <property type="project" value="UniProtKB-SubCell"/>
</dbReference>
<dbReference type="GO" id="GO:0016020">
    <property type="term" value="C:membrane"/>
    <property type="evidence" value="ECO:0007669"/>
    <property type="project" value="UniProtKB-KW"/>
</dbReference>
<dbReference type="GO" id="GO:0019028">
    <property type="term" value="C:viral capsid"/>
    <property type="evidence" value="ECO:0007669"/>
    <property type="project" value="UniProtKB-KW"/>
</dbReference>
<dbReference type="GO" id="GO:0019031">
    <property type="term" value="C:viral envelope"/>
    <property type="evidence" value="ECO:0007669"/>
    <property type="project" value="UniProtKB-KW"/>
</dbReference>
<dbReference type="GO" id="GO:0055036">
    <property type="term" value="C:virion membrane"/>
    <property type="evidence" value="ECO:0007669"/>
    <property type="project" value="UniProtKB-SubCell"/>
</dbReference>
<dbReference type="GO" id="GO:0005524">
    <property type="term" value="F:ATP binding"/>
    <property type="evidence" value="ECO:0007669"/>
    <property type="project" value="UniProtKB-KW"/>
</dbReference>
<dbReference type="GO" id="GO:0016887">
    <property type="term" value="F:ATP hydrolysis activity"/>
    <property type="evidence" value="ECO:0007669"/>
    <property type="project" value="RHEA"/>
</dbReference>
<dbReference type="GO" id="GO:0003725">
    <property type="term" value="F:double-stranded RNA binding"/>
    <property type="evidence" value="ECO:0007669"/>
    <property type="project" value="InterPro"/>
</dbReference>
<dbReference type="GO" id="GO:0046872">
    <property type="term" value="F:metal ion binding"/>
    <property type="evidence" value="ECO:0007669"/>
    <property type="project" value="UniProtKB-KW"/>
</dbReference>
<dbReference type="GO" id="GO:0004483">
    <property type="term" value="F:mRNA (nucleoside-2'-O-)-methyltransferase activity"/>
    <property type="evidence" value="ECO:0007669"/>
    <property type="project" value="UniProtKB-EC"/>
</dbReference>
<dbReference type="GO" id="GO:0004482">
    <property type="term" value="F:mRNA 5'-cap (guanine-N7-)-methyltransferase activity"/>
    <property type="evidence" value="ECO:0007669"/>
    <property type="project" value="UniProtKB-EC"/>
</dbReference>
<dbReference type="GO" id="GO:0046983">
    <property type="term" value="F:protein dimerization activity"/>
    <property type="evidence" value="ECO:0007669"/>
    <property type="project" value="InterPro"/>
</dbReference>
<dbReference type="GO" id="GO:0003724">
    <property type="term" value="F:RNA helicase activity"/>
    <property type="evidence" value="ECO:0007669"/>
    <property type="project" value="UniProtKB-EC"/>
</dbReference>
<dbReference type="GO" id="GO:0003968">
    <property type="term" value="F:RNA-directed RNA polymerase activity"/>
    <property type="evidence" value="ECO:0007669"/>
    <property type="project" value="UniProtKB-KW"/>
</dbReference>
<dbReference type="GO" id="GO:0004252">
    <property type="term" value="F:serine-type endopeptidase activity"/>
    <property type="evidence" value="ECO:0007669"/>
    <property type="project" value="InterPro"/>
</dbReference>
<dbReference type="GO" id="GO:0005198">
    <property type="term" value="F:structural molecule activity"/>
    <property type="evidence" value="ECO:0007669"/>
    <property type="project" value="InterPro"/>
</dbReference>
<dbReference type="GO" id="GO:0075512">
    <property type="term" value="P:clathrin-dependent endocytosis of virus by host cell"/>
    <property type="evidence" value="ECO:0007669"/>
    <property type="project" value="UniProtKB-KW"/>
</dbReference>
<dbReference type="GO" id="GO:0039654">
    <property type="term" value="P:fusion of virus membrane with host endosome membrane"/>
    <property type="evidence" value="ECO:0007669"/>
    <property type="project" value="UniProtKB-KW"/>
</dbReference>
<dbReference type="GO" id="GO:0006508">
    <property type="term" value="P:proteolysis"/>
    <property type="evidence" value="ECO:0007669"/>
    <property type="project" value="UniProtKB-KW"/>
</dbReference>
<dbReference type="GO" id="GO:0039520">
    <property type="term" value="P:symbiont-mediated activation of host autophagy"/>
    <property type="evidence" value="ECO:0007669"/>
    <property type="project" value="UniProtKB-KW"/>
</dbReference>
<dbReference type="GO" id="GO:0039574">
    <property type="term" value="P:symbiont-mediated suppression of host JAK-STAT cascade via inhibition of host TYK2 activity"/>
    <property type="evidence" value="ECO:0007669"/>
    <property type="project" value="UniProtKB-KW"/>
</dbReference>
<dbReference type="GO" id="GO:0039576">
    <property type="term" value="P:symbiont-mediated suppression of host JAK-STAT cascade via inhibition of JAK1 activity"/>
    <property type="evidence" value="ECO:0007669"/>
    <property type="project" value="UniProtKB-KW"/>
</dbReference>
<dbReference type="GO" id="GO:0039563">
    <property type="term" value="P:symbiont-mediated suppression of host JAK-STAT cascade via inhibition of STAT1 activity"/>
    <property type="evidence" value="ECO:0007669"/>
    <property type="project" value="UniProtKB-KW"/>
</dbReference>
<dbReference type="GO" id="GO:0039564">
    <property type="term" value="P:symbiont-mediated suppression of host JAK-STAT cascade via inhibition of STAT2 activity"/>
    <property type="evidence" value="ECO:0007669"/>
    <property type="project" value="UniProtKB-KW"/>
</dbReference>
<dbReference type="GO" id="GO:0039502">
    <property type="term" value="P:symbiont-mediated suppression of host type I interferon-mediated signaling pathway"/>
    <property type="evidence" value="ECO:0007669"/>
    <property type="project" value="UniProtKB-KW"/>
</dbReference>
<dbReference type="GO" id="GO:0039694">
    <property type="term" value="P:viral RNA genome replication"/>
    <property type="evidence" value="ECO:0007669"/>
    <property type="project" value="InterPro"/>
</dbReference>
<dbReference type="GO" id="GO:0019062">
    <property type="term" value="P:virion attachment to host cell"/>
    <property type="evidence" value="ECO:0007669"/>
    <property type="project" value="UniProtKB-KW"/>
</dbReference>
<dbReference type="CDD" id="cd20761">
    <property type="entry name" value="capping_2-OMTase_Flaviviridae"/>
    <property type="match status" value="1"/>
</dbReference>
<dbReference type="CDD" id="cd17931">
    <property type="entry name" value="DEXHc_viral_Ns3"/>
    <property type="match status" value="1"/>
</dbReference>
<dbReference type="CDD" id="cd12149">
    <property type="entry name" value="Flavi_E_C"/>
    <property type="match status" value="1"/>
</dbReference>
<dbReference type="CDD" id="cd23204">
    <property type="entry name" value="Flavivirus_RdRp"/>
    <property type="match status" value="1"/>
</dbReference>
<dbReference type="CDD" id="cd18806">
    <property type="entry name" value="SF2_C_viral"/>
    <property type="match status" value="1"/>
</dbReference>
<dbReference type="FunFam" id="1.20.1280.260:FF:000001">
    <property type="entry name" value="Envelope glycoprotein"/>
    <property type="match status" value="1"/>
</dbReference>
<dbReference type="FunFam" id="2.60.40.350:FF:000001">
    <property type="entry name" value="Envelope glycoprotein"/>
    <property type="match status" value="1"/>
</dbReference>
<dbReference type="FunFam" id="1.10.10.930:FF:000002">
    <property type="entry name" value="Genome polyprotein"/>
    <property type="match status" value="1"/>
</dbReference>
<dbReference type="FunFam" id="1.10.260.90:FF:000001">
    <property type="entry name" value="Genome polyprotein"/>
    <property type="match status" value="1"/>
</dbReference>
<dbReference type="FunFam" id="1.10.8.970:FF:000003">
    <property type="entry name" value="Genome polyprotein"/>
    <property type="match status" value="1"/>
</dbReference>
<dbReference type="FunFam" id="2.40.10.120:FF:000005">
    <property type="entry name" value="Genome polyprotein"/>
    <property type="match status" value="1"/>
</dbReference>
<dbReference type="FunFam" id="2.40.10.120:FF:000006">
    <property type="entry name" value="Genome polyprotein"/>
    <property type="match status" value="1"/>
</dbReference>
<dbReference type="FunFam" id="2.60.260.50:FF:000001">
    <property type="entry name" value="Genome polyprotein"/>
    <property type="match status" value="1"/>
</dbReference>
<dbReference type="FunFam" id="3.30.70.2840:FF:000001">
    <property type="entry name" value="Genome polyprotein"/>
    <property type="match status" value="1"/>
</dbReference>
<dbReference type="FunFam" id="3.30.70.2840:FF:000002">
    <property type="entry name" value="Genome polyprotein"/>
    <property type="match status" value="1"/>
</dbReference>
<dbReference type="FunFam" id="3.40.50.150:FF:000105">
    <property type="entry name" value="Genome polyprotein"/>
    <property type="match status" value="1"/>
</dbReference>
<dbReference type="FunFam" id="3.40.50.300:FF:000763">
    <property type="entry name" value="Genome polyprotein"/>
    <property type="match status" value="1"/>
</dbReference>
<dbReference type="Gene3D" id="1.10.10.930">
    <property type="match status" value="1"/>
</dbReference>
<dbReference type="Gene3D" id="1.10.260.90">
    <property type="match status" value="1"/>
</dbReference>
<dbReference type="Gene3D" id="1.20.1280.260">
    <property type="match status" value="1"/>
</dbReference>
<dbReference type="Gene3D" id="2.40.10.120">
    <property type="match status" value="2"/>
</dbReference>
<dbReference type="Gene3D" id="2.60.40.350">
    <property type="match status" value="1"/>
</dbReference>
<dbReference type="Gene3D" id="1.10.8.970">
    <property type="entry name" value="Flavivirus envelope glycoprotein M-like"/>
    <property type="match status" value="1"/>
</dbReference>
<dbReference type="Gene3D" id="2.60.260.50">
    <property type="entry name" value="Flavivirus polyprotein propeptide domain"/>
    <property type="match status" value="1"/>
</dbReference>
<dbReference type="Gene3D" id="3.30.70.2840">
    <property type="entry name" value="Flavivirus RNA-directed RNA polymerase, thumb domain"/>
    <property type="match status" value="3"/>
</dbReference>
<dbReference type="Gene3D" id="3.40.50.300">
    <property type="entry name" value="P-loop containing nucleotide triphosphate hydrolases"/>
    <property type="match status" value="2"/>
</dbReference>
<dbReference type="Gene3D" id="2.60.98.10">
    <property type="entry name" value="Tick-borne Encephalitis virus Glycoprotein, domain 1"/>
    <property type="match status" value="1"/>
</dbReference>
<dbReference type="Gene3D" id="3.40.50.150">
    <property type="entry name" value="Vaccinia Virus protein VP39"/>
    <property type="match status" value="1"/>
</dbReference>
<dbReference type="Gene3D" id="3.30.67.10">
    <property type="entry name" value="Viral Envelope Glycoprotein, domain 2"/>
    <property type="match status" value="1"/>
</dbReference>
<dbReference type="Gene3D" id="3.30.387.10">
    <property type="entry name" value="Viral Envelope Glycoprotein, domain 3"/>
    <property type="match status" value="1"/>
</dbReference>
<dbReference type="InterPro" id="IPR043502">
    <property type="entry name" value="DNA/RNA_pol_sf"/>
</dbReference>
<dbReference type="InterPro" id="IPR000069">
    <property type="entry name" value="Env_glycoprot_M_flavivir"/>
</dbReference>
<dbReference type="InterPro" id="IPR038302">
    <property type="entry name" value="Env_glycoprot_M_sf_flavivir"/>
</dbReference>
<dbReference type="InterPro" id="IPR013755">
    <property type="entry name" value="Flav_gly_cen_dom_subdom1"/>
</dbReference>
<dbReference type="InterPro" id="IPR001122">
    <property type="entry name" value="Flavi_capsidC"/>
</dbReference>
<dbReference type="InterPro" id="IPR037172">
    <property type="entry name" value="Flavi_capsidC_sf"/>
</dbReference>
<dbReference type="InterPro" id="IPR011492">
    <property type="entry name" value="Flavi_DEAD"/>
</dbReference>
<dbReference type="InterPro" id="IPR027287">
    <property type="entry name" value="Flavi_E_Ig-like"/>
</dbReference>
<dbReference type="InterPro" id="IPR026470">
    <property type="entry name" value="Flavi_E_Stem/Anchor_dom"/>
</dbReference>
<dbReference type="InterPro" id="IPR038345">
    <property type="entry name" value="Flavi_E_Stem/Anchor_dom_sf"/>
</dbReference>
<dbReference type="InterPro" id="IPR011998">
    <property type="entry name" value="Flavi_Glycoprot_E_cen/dimer"/>
</dbReference>
<dbReference type="InterPro" id="IPR001157">
    <property type="entry name" value="Flavi_NS1"/>
</dbReference>
<dbReference type="InterPro" id="IPR000752">
    <property type="entry name" value="Flavi_NS2A"/>
</dbReference>
<dbReference type="InterPro" id="IPR000487">
    <property type="entry name" value="Flavi_NS2B"/>
</dbReference>
<dbReference type="InterPro" id="IPR001850">
    <property type="entry name" value="Flavi_NS3_S7"/>
</dbReference>
<dbReference type="InterPro" id="IPR000404">
    <property type="entry name" value="Flavi_NS4A"/>
</dbReference>
<dbReference type="InterPro" id="IPR001528">
    <property type="entry name" value="Flavi_NS4B"/>
</dbReference>
<dbReference type="InterPro" id="IPR046811">
    <property type="entry name" value="Flavi_NS5_thumb"/>
</dbReference>
<dbReference type="InterPro" id="IPR002535">
    <property type="entry name" value="Flavi_propep"/>
</dbReference>
<dbReference type="InterPro" id="IPR038688">
    <property type="entry name" value="Flavi_propep_sf"/>
</dbReference>
<dbReference type="InterPro" id="IPR047530">
    <property type="entry name" value="Flavi_RdRp"/>
</dbReference>
<dbReference type="InterPro" id="IPR000208">
    <property type="entry name" value="Flavi_RdRp_fingers/palm"/>
</dbReference>
<dbReference type="InterPro" id="IPR000336">
    <property type="entry name" value="Flavivir/Alphavir_Ig-like_sf"/>
</dbReference>
<dbReference type="InterPro" id="IPR014412">
    <property type="entry name" value="Gen_Poly_FLV"/>
</dbReference>
<dbReference type="InterPro" id="IPR036253">
    <property type="entry name" value="Glycoprot_cen/dimer_sf"/>
</dbReference>
<dbReference type="InterPro" id="IPR038055">
    <property type="entry name" value="Glycoprot_E_dimer_dom"/>
</dbReference>
<dbReference type="InterPro" id="IPR013756">
    <property type="entry name" value="GlyE_cen_dom_subdom2"/>
</dbReference>
<dbReference type="InterPro" id="IPR014001">
    <property type="entry name" value="Helicase_ATP-bd"/>
</dbReference>
<dbReference type="InterPro" id="IPR001650">
    <property type="entry name" value="Helicase_C-like"/>
</dbReference>
<dbReference type="InterPro" id="IPR014756">
    <property type="entry name" value="Ig_E-set"/>
</dbReference>
<dbReference type="InterPro" id="IPR026490">
    <property type="entry name" value="mRNA_cap_0/1_MeTrfase"/>
</dbReference>
<dbReference type="InterPro" id="IPR049486">
    <property type="entry name" value="NS3-hel_C_flaviviridae"/>
</dbReference>
<dbReference type="InterPro" id="IPR027417">
    <property type="entry name" value="P-loop_NTPase"/>
</dbReference>
<dbReference type="InterPro" id="IPR009003">
    <property type="entry name" value="Peptidase_S1_PA"/>
</dbReference>
<dbReference type="InterPro" id="IPR007094">
    <property type="entry name" value="RNA-dir_pol_PSvirus"/>
</dbReference>
<dbReference type="InterPro" id="IPR002877">
    <property type="entry name" value="RNA_MeTrfase_FtsJ_dom"/>
</dbReference>
<dbReference type="InterPro" id="IPR029063">
    <property type="entry name" value="SAM-dependent_MTases_sf"/>
</dbReference>
<dbReference type="NCBIfam" id="TIGR04240">
    <property type="entry name" value="flavi_E_stem"/>
    <property type="match status" value="1"/>
</dbReference>
<dbReference type="Pfam" id="PF20907">
    <property type="entry name" value="Flav_NS3-hel_C"/>
    <property type="match status" value="1"/>
</dbReference>
<dbReference type="Pfam" id="PF01003">
    <property type="entry name" value="Flavi_capsid"/>
    <property type="match status" value="1"/>
</dbReference>
<dbReference type="Pfam" id="PF07652">
    <property type="entry name" value="Flavi_DEAD"/>
    <property type="match status" value="1"/>
</dbReference>
<dbReference type="Pfam" id="PF21659">
    <property type="entry name" value="Flavi_E_stem"/>
    <property type="match status" value="1"/>
</dbReference>
<dbReference type="Pfam" id="PF02832">
    <property type="entry name" value="Flavi_glycop_C"/>
    <property type="match status" value="1"/>
</dbReference>
<dbReference type="Pfam" id="PF00869">
    <property type="entry name" value="Flavi_glycoprot"/>
    <property type="match status" value="1"/>
</dbReference>
<dbReference type="Pfam" id="PF01004">
    <property type="entry name" value="Flavi_M"/>
    <property type="match status" value="1"/>
</dbReference>
<dbReference type="Pfam" id="PF00948">
    <property type="entry name" value="Flavi_NS1"/>
    <property type="match status" value="1"/>
</dbReference>
<dbReference type="Pfam" id="PF01005">
    <property type="entry name" value="Flavi_NS2A"/>
    <property type="match status" value="1"/>
</dbReference>
<dbReference type="Pfam" id="PF01002">
    <property type="entry name" value="Flavi_NS2B"/>
    <property type="match status" value="1"/>
</dbReference>
<dbReference type="Pfam" id="PF01350">
    <property type="entry name" value="Flavi_NS4A"/>
    <property type="match status" value="1"/>
</dbReference>
<dbReference type="Pfam" id="PF01349">
    <property type="entry name" value="Flavi_NS4B"/>
    <property type="match status" value="1"/>
</dbReference>
<dbReference type="Pfam" id="PF00972">
    <property type="entry name" value="Flavi_NS5"/>
    <property type="match status" value="1"/>
</dbReference>
<dbReference type="Pfam" id="PF20483">
    <property type="entry name" value="Flavi_NS5_thumb"/>
    <property type="match status" value="1"/>
</dbReference>
<dbReference type="Pfam" id="PF01570">
    <property type="entry name" value="Flavi_propep"/>
    <property type="match status" value="1"/>
</dbReference>
<dbReference type="Pfam" id="PF01728">
    <property type="entry name" value="FtsJ"/>
    <property type="match status" value="1"/>
</dbReference>
<dbReference type="Pfam" id="PF00949">
    <property type="entry name" value="Peptidase_S7"/>
    <property type="match status" value="1"/>
</dbReference>
<dbReference type="PIRSF" id="PIRSF003817">
    <property type="entry name" value="Gen_Poly_FLV"/>
    <property type="match status" value="1"/>
</dbReference>
<dbReference type="SMART" id="SM00487">
    <property type="entry name" value="DEXDc"/>
    <property type="match status" value="1"/>
</dbReference>
<dbReference type="SMART" id="SM00490">
    <property type="entry name" value="HELICc"/>
    <property type="match status" value="1"/>
</dbReference>
<dbReference type="SUPFAM" id="SSF56672">
    <property type="entry name" value="DNA/RNA polymerases"/>
    <property type="match status" value="1"/>
</dbReference>
<dbReference type="SUPFAM" id="SSF81296">
    <property type="entry name" value="E set domains"/>
    <property type="match status" value="1"/>
</dbReference>
<dbReference type="SUPFAM" id="SSF101257">
    <property type="entry name" value="Flavivirus capsid protein C"/>
    <property type="match status" value="1"/>
</dbReference>
<dbReference type="SUPFAM" id="SSF52540">
    <property type="entry name" value="P-loop containing nucleoside triphosphate hydrolases"/>
    <property type="match status" value="2"/>
</dbReference>
<dbReference type="SUPFAM" id="SSF53335">
    <property type="entry name" value="S-adenosyl-L-methionine-dependent methyltransferases"/>
    <property type="match status" value="1"/>
</dbReference>
<dbReference type="SUPFAM" id="SSF50494">
    <property type="entry name" value="Trypsin-like serine proteases"/>
    <property type="match status" value="1"/>
</dbReference>
<dbReference type="SUPFAM" id="SSF56983">
    <property type="entry name" value="Viral glycoprotein, central and dimerisation domains"/>
    <property type="match status" value="1"/>
</dbReference>
<dbReference type="PROSITE" id="PS51527">
    <property type="entry name" value="FLAVIVIRUS_NS2B"/>
    <property type="match status" value="1"/>
</dbReference>
<dbReference type="PROSITE" id="PS51528">
    <property type="entry name" value="FLAVIVIRUS_NS3PRO"/>
    <property type="match status" value="1"/>
</dbReference>
<dbReference type="PROSITE" id="PS51192">
    <property type="entry name" value="HELICASE_ATP_BIND_1"/>
    <property type="match status" value="1"/>
</dbReference>
<dbReference type="PROSITE" id="PS51194">
    <property type="entry name" value="HELICASE_CTER"/>
    <property type="match status" value="1"/>
</dbReference>
<dbReference type="PROSITE" id="PS50507">
    <property type="entry name" value="RDRP_SSRNA_POS"/>
    <property type="match status" value="1"/>
</dbReference>
<dbReference type="PROSITE" id="PS51591">
    <property type="entry name" value="RNA_CAP01_NS5_MT"/>
    <property type="match status" value="1"/>
</dbReference>
<accession>P14335</accession>
<accession>Q7T4P4</accession>
<accession>Q7T4P5</accession>
<accession>Q82983</accession>
<name>POLG_KUNJM</name>
<keyword id="KW-0002">3D-structure</keyword>
<keyword id="KW-0007">Acetylation</keyword>
<keyword id="KW-1072">Activation of host autophagy by virus</keyword>
<keyword id="KW-0067">ATP-binding</keyword>
<keyword id="KW-0167">Capsid protein</keyword>
<keyword id="KW-1165">Clathrin-mediated endocytosis of virus by host</keyword>
<keyword id="KW-0165">Cleavage on pair of basic residues</keyword>
<keyword id="KW-1015">Disulfide bond</keyword>
<keyword id="KW-1170">Fusion of virus membrane with host endosomal membrane</keyword>
<keyword id="KW-1168">Fusion of virus membrane with host membrane</keyword>
<keyword id="KW-0325">Glycoprotein</keyword>
<keyword id="KW-0347">Helicase</keyword>
<keyword id="KW-1035">Host cytoplasm</keyword>
<keyword id="KW-1038">Host endoplasmic reticulum</keyword>
<keyword id="KW-1043">Host membrane</keyword>
<keyword id="KW-1048">Host nucleus</keyword>
<keyword id="KW-0945">Host-virus interaction</keyword>
<keyword id="KW-0378">Hydrolase</keyword>
<keyword id="KW-1090">Inhibition of host innate immune response by virus</keyword>
<keyword id="KW-1114">Inhibition of host interferon signaling pathway by virus</keyword>
<keyword id="KW-1096">Inhibition of host JAK1 by virus</keyword>
<keyword id="KW-1105">Inhibition of host STAT1 by virus</keyword>
<keyword id="KW-1106">Inhibition of host STAT2 by virus</keyword>
<keyword id="KW-1112">Inhibition of host TYK2 by virus</keyword>
<keyword id="KW-0922">Interferon antiviral system evasion</keyword>
<keyword id="KW-0472">Membrane</keyword>
<keyword id="KW-0479">Metal-binding</keyword>
<keyword id="KW-0489">Methyltransferase</keyword>
<keyword id="KW-0506">mRNA capping</keyword>
<keyword id="KW-0507">mRNA processing</keyword>
<keyword id="KW-0511">Multifunctional enzyme</keyword>
<keyword id="KW-0547">Nucleotide-binding</keyword>
<keyword id="KW-0548">Nucleotidyltransferase</keyword>
<keyword id="KW-0597">Phosphoprotein</keyword>
<keyword id="KW-0645">Protease</keyword>
<keyword id="KW-0694">RNA-binding</keyword>
<keyword id="KW-0696">RNA-directed RNA polymerase</keyword>
<keyword id="KW-0949">S-adenosyl-L-methionine</keyword>
<keyword id="KW-0964">Secreted</keyword>
<keyword id="KW-0720">Serine protease</keyword>
<keyword id="KW-0941">Suppressor of RNA silencing</keyword>
<keyword id="KW-0804">Transcription</keyword>
<keyword id="KW-0805">Transcription regulation</keyword>
<keyword id="KW-0808">Transferase</keyword>
<keyword id="KW-0812">Transmembrane</keyword>
<keyword id="KW-1133">Transmembrane helix</keyword>
<keyword id="KW-1161">Viral attachment to host cell</keyword>
<keyword id="KW-0261">Viral envelope protein</keyword>
<keyword id="KW-0899">Viral immunoevasion</keyword>
<keyword id="KW-1162">Viral penetration into host cytoplasm</keyword>
<keyword id="KW-0693">Viral RNA replication</keyword>
<keyword id="KW-0946">Virion</keyword>
<keyword id="KW-1164">Virus endocytosis by host</keyword>
<keyword id="KW-1160">Virus entry into host cell</keyword>
<keyword id="KW-0862">Zinc</keyword>
<organismHost>
    <name type="scientific">Ciconiiformes</name>
    <name type="common">storks and others</name>
    <dbReference type="NCBI Taxonomy" id="8920"/>
</organismHost>
<organismHost>
    <name type="scientific">Culex annulirostris</name>
    <name type="common">Common banded mosquito</name>
    <dbReference type="NCBI Taxonomy" id="162997"/>
</organismHost>
<organismHost>
    <name type="scientific">Equus caballus</name>
    <name type="common">Horse</name>
    <dbReference type="NCBI Taxonomy" id="9796"/>
</organismHost>
<organismHost>
    <name type="scientific">Homo sapiens</name>
    <name type="common">Human</name>
    <dbReference type="NCBI Taxonomy" id="9606"/>
</organismHost>
<sequence>MSKKPGGPGKSRAVNMLKRGMPRVLSLTGLKRAMLSLIDGRGPTRFVLALLAFFRFTAIAPTRAVLDRWRSVNKQTAMKHLLSFKKELGTLTSAINRRSSKQKKRGGKTGIAFMIGLIAGVGAVTLSNFQGKVMMTVNATDVTDIITIPPAAGKNLCIVRAMDVGHMCDDTITYECPVLSAGNDPEDIDCWCTKLAVYVRYGRCTKTRHSRRSRRSLTVQTHGESTLSNKKGAWMDSTKATRYLVKTESWILRNPGYALVAAVIGWMLGSNTMQRVVFAVLLLLVAPAYSFNCLGMSNRDFLEGVSGATWVDLVLEGDSCVTIMSKDKPTIDVKMMNMEAANLAEVRSYCYLATVSELSTKAACPTMGEAHNDKRADPSFVCKQGVVDRGWGNGCGLFGKGSIDTCAKFACSTKATGRTILKENIKYEVAIFVHGPTTVESHGNYFTQTGAAQAGRFSITPAAPSYTLKLGEYGEVTVDCEPRSGIDTSAYYVMTVGTKTFLVHREWFMDLNLPWSSAESNVWRNRETLMEFEEPHATKQSVIALGSQEGALHQALAGAIPVEFSSNTVKLTSGHLKCRVKMEKLQLKGTTYGVCSKAFRFLGTPADTGHGTVVLELQYTGTDGPCKIPISSVASLNDLTPVGRLVTVNPFVSVSTANAKVLIELEPPFGDSYIVVGRGEQQINHHWHKSGSSIGKAFTATLKGAQRLAALGDTAWDFGSVGGVFTSVGKAVHQVFGGAFRSLFGGMSWITQGLLGALLLWMGINARDRSIALTFLAVGGVLLFLSVNVHADTGCAIDISRQELRCGSGVFIHNDVEAWIDRYKYYPETPQGLAKIIQKAHKEGVCGLRSVSRLEHQMWEAVKDELNTLLKENGVDLSIVVEKQEGMYKSAPRRLTATTEKLEIGWKAWGKSILFAPELANNTFVIDGPETKECPTQNRAWNNLEVEDFGFGLTSTRMFLRVRESNTTECDSKIIGTAVKNNLAIHSDLSYWIESRFNDTWKLERAVLGEVKSCTWPETHTLWGDGVLESDLIIPITLAGPRSNHNRRPGYKTQSQGPWDEGRVEIDFDYCPGTTVTLSESCGHRGPATRTTTESGKLITDWCCRSCTLPPLRYQTDNGCWYGMEIRPQRHDEKTLVQSQVNAYNADMIDPFQLGLLVVFLATQEVLRKRWTAKISMPAILIALLVLVFGGITYTDVLRYVILVGAAFAESNSGGDVVHLALMATFKIQPVFMVASFLKARWTNQENILLMLAAAFFQMAYYDARQILLWEMPDVLNSLAVAWMILRAITFTTTSNVVVPLLALLTPGLRCLNLDVYRILLLMVGIGSLIREKRSAAAKKKGASLLCLALASTGFFNPMILAAGLVACDPNRKRGWPATEVMTAVGLMFAIVGGLAELDIDSMAIPMTIAGLMFAAFVISGKSTDMWIERTADISWEGDAEITGSSERVDVRLDDDGNFQLMNDPGAPWKIWMLRMACLAISAYTPWAILPSVVGFWITLQYTKRGGVLWDTPSPKEYKRGDTTTGVYRIMTRGLLGSYQAGAGVMVEGVFHTLWHTTKGAALMSGEGRLDPYWGSVKEDRLCYGGPWKLQHKWNGQDEVQMIVVEPGKNVKNVQTKPGVFKTPEGEIGAVTLDFPTGTSGSPIVDKNGDVIGLYGNGVIMPNGSYISAIVQGERMDEPVPAGFEPEMLRKKQITVLDLHPGAGKTRRILPQIIKEAINRRLRTAVLAPTRVVAAEMAEALRGLPIRYQTSAVAREHNGNEIVDVMCHATLTHRLMSPHRVPNYNLFVMDEAHFTDPASIAARGYISTRVELGEAAAIFMTATPPGTSDPFPESNAPISDLQTEIPDRAWNSGYEWITEYIGKTVWFVPSVKMGNEIALCLQRAGKKVIQLNRKSYETEYPKCKNDDWDFVVTTDISEMGANFKASRVIDSRKSVKPTIITEGEGRVILGEPSAVTAASAAQRRGRTGRNPSQAGDEYCYGGHTNEDDSNCAHWTEARIMLDNINMPNGLIAQFYQPEREKVYTMDGEYRLRGEERKNFLELLRTADLPVWLAYKVAAAGVSYHDRRWCFDGPRTNTILEDNNEVEVITKLGERKILRPRWIDARVYSDHQALKSFKDFASGKRSQIGFIEVLGKMPEHFMGKTWEALDTMYVVATAEKGGRAHRMALEELPDALQTIALIALLSVMTMGVFFLLMQRKGIGKIGLGGVVLGAATFFCWMAEVPGTKIAGMLLLSLLLMIVLIPEPEKQRSQTDNQLAVFLICVLTLVGAVAANEMGWLDKTKSDISGLFGQRIETKENFSIGEFLLDLRPATAWSLYAVTTAVLTPLLKHLITSDYITTSLTSINVQASALFTLARGFPFVDVGVSALLLAAGCWGQVTLTVTVTSATLLFCHYAYMVPGWQAEAMRSAQRRTAAGIMKNAVVDGIVATDVPELERTTPIMQKKVGQVMLILVSLAALVVNPSVKTVREAGILITAAAVTLWENGASSVWNATTAIGLCHIMRGGWLSCLSITWTLVKNMEKPGLKRGGAKGRTLGEVWKERLNQMTKEEFIRYRKEAITEVDRSAAKHARKERNITGGHPVSRGTAKLRWLVERRFLEPVGKVIDLGCGRGGWCYYMATQKRVQEVRGYTKGGPGHEEPQLVQSYGWNIVTMKSGVDVFYRPSECCDTLLCDIGESSSSAEVEEHRTLRVLEMVEDWLHRGPKEFCVKVLCPYMPKVIEKMELLQRRYGGGLVRNPLSRNSTHEMYWVSRASGNVVHSVNMTSQVLLGRMEKKTWKGPQYEEDVNLGSGTRAVGKPLLNSDTSKIKNRIERLRREYSSTWHHDENHPYRTWNYHGSYEVKPTGSASSLVNGVVRLLSKPWDTITNVTTMAMTDTTPFGQQRVFKEKVDTKAPEPPEGVKYVLNETTNWLWAFLAREKRPRMCSREEFIRKVNSNAALGAMFEEQNQWRSAREAVEDPKFWEMVDEEREAHLRGECHTCIYNMMGKREKKPGEFGKAKGSRAIWFMWLGARFLEFEALGFLNEDHWLGRKNSGGGVEGLGLQKLGYILREVGTRPGGRIYADDTAGWDTRITRADLENEAKVLELLDGEHRRLARAIIELTYRHKVVKVMRPAADGRTVMDVISREDQRGSGQVVTYALNTFTNLAVQLVRMMEGEGVIGPDDVEKLTKGKGPKVRTWLSENGEERLSRMAVSGDDCVVKPLDDRFATSLHFLNAMSKVRKDIQEWKPSTGWYDWQQVPFCSNHFTELIMKDGRTLVTPCRGQDELVGRARISPGAGWNVRDTACLAKSYAQMWLLLYFHRRDLRLMANAICSAVPVNWVPTGRTTWSIHAGGEWMTTEDMLEVWNRVWIEENEWMEDKTPVEKWSDVPYSGKREDIWCGSLIGTRARATWAENIQVAINQVRSIIGDEKYVDYMSSLKRYEDTTLVEDTVL</sequence>
<organism>
    <name type="scientific">Kunjin virus (strain MRM61C)</name>
    <dbReference type="NCBI Taxonomy" id="11078"/>
    <lineage>
        <taxon>Viruses</taxon>
        <taxon>Riboviria</taxon>
        <taxon>Orthornavirae</taxon>
        <taxon>Kitrinoviricota</taxon>
        <taxon>Flasuviricetes</taxon>
        <taxon>Amarillovirales</taxon>
        <taxon>Flaviviridae</taxon>
        <taxon>Orthoflavivirus</taxon>
        <taxon>Orthoflavivirus nilense</taxon>
    </lineage>
</organism>
<reference key="1">
    <citation type="journal article" date="1988" name="J. Gen. Virol.">
        <title>Nucleotide and complete amino acid sequences of Kunjin virus: definitive gene order and characteristics of the virus-specified proteins.</title>
        <authorList>
            <person name="Coia G."/>
            <person name="Parker M.D."/>
            <person name="Speight G."/>
            <person name="Byrne M.E."/>
            <person name="Westaway E.G."/>
        </authorList>
    </citation>
    <scope>NUCLEOTIDE SEQUENCE [GENOMIC RNA]</scope>
</reference>
<reference key="2">
    <citation type="journal article" date="2003" name="J. Virol.">
        <title>Molecular and functional analyses of Kunjin virus infectious cDNA clones demonstrate the essential role for NS2A in virus assembly and for a nonconservative residue in NS3 in RNA replication.</title>
        <authorList>
            <person name="Liu W.J."/>
            <person name="Chen H.B."/>
            <person name="Khromykh A.A."/>
        </authorList>
    </citation>
    <scope>NUCLEOTIDE SEQUENCE [GENOMIC RNA]</scope>
    <source>
        <strain>Infectious clone FLSDX</strain>
        <strain>Infectious clone pAKUN</strain>
    </source>
</reference>
<reference key="3">
    <citation type="journal article" date="1998" name="Virology">
        <title>Subcellular localization and some biochemical properties of the flavivirus Kunjin nonstructural proteins NS2A and NS4A.</title>
        <authorList>
            <person name="Mackenzie J.M."/>
            <person name="Khromykh A.A."/>
            <person name="Jones M.K."/>
            <person name="Westaway E.G."/>
        </authorList>
    </citation>
    <scope>SUBCELLULAR LOCATION (NON-STRUCTURAL PROTEIN 2A)</scope>
    <scope>SUBCELLULAR LOCATION (NON-STRUCTURAL PROTEIN 4A)</scope>
</reference>
<reference key="4">
    <citation type="journal article" date="2004" name="J. Virol.">
        <title>Analysis of adaptive mutations in Kunjin virus replicon RNA reveals a novel role for the flavivirus nonstructural protein NS2A in inhibition of beta interferon promoter-driven transcription.</title>
        <authorList>
            <person name="Liu W.J."/>
            <person name="Chen H.B."/>
            <person name="Wang X.J."/>
            <person name="Huang H."/>
            <person name="Khromykh A.A."/>
        </authorList>
    </citation>
    <scope>FUNCTION (NON-STRUCTURAL PROTEIN 2A)</scope>
    <scope>MUTAGENESIS OF ALA-1173; ASN-1244 AND PRO-2798</scope>
</reference>
<reference key="5">
    <citation type="journal article" date="2005" name="J. Virol.">
        <title>Inhibition of interferon signaling by the New York 99 strain and Kunjin subtype of West Nile virus involves blockage of STAT1 and STAT2 activation by nonstructural proteins.</title>
        <authorList>
            <person name="Liu W.J."/>
            <person name="Wang X.J."/>
            <person name="Mokhonov V.V."/>
            <person name="Shi P.Y."/>
            <person name="Randall R."/>
            <person name="Khromykh A.A."/>
        </authorList>
    </citation>
    <scope>FUNCTION (NON-STRUCTURAL PROTEIN 2A)</scope>
    <scope>FUNCTION (NON-STRUCTURAL PROTEIN 2B)</scope>
    <scope>FUNCTION (NON-STRUCTURAL PROTEIN 3)</scope>
    <scope>FUNCTION (NON-STRUCTURAL PROTEIN 4A)</scope>
    <scope>FUNCTION (NON-STRUCTURAL PROTEIN 4B)</scope>
</reference>
<reference key="6">
    <citation type="journal article" date="2005" name="J. Virol.">
        <title>West Nile virus inhibits the signal transduction pathway of alpha interferon.</title>
        <authorList>
            <person name="Guo J.T."/>
            <person name="Hayashi J."/>
            <person name="Seeger C."/>
        </authorList>
    </citation>
    <scope>FUNCTION (RNA-DIRECTED RNA POLYMERASE NS5)</scope>
</reference>
<reference key="7">
    <citation type="journal article" date="2006" name="J. Virol.">
        <title>A single amino acid substitution in the West Nile virus nonstructural protein NS2A disables its ability to inhibit alpha/beta interferon induction and attenuates virus virulence in mice.</title>
        <authorList>
            <person name="Liu W.J."/>
            <person name="Wang X.J."/>
            <person name="Clark D.C."/>
            <person name="Lobigs M."/>
            <person name="Hall R.A."/>
            <person name="Khromykh A.A."/>
        </authorList>
    </citation>
    <scope>MUTAGENESIS OF ALA-1173</scope>
</reference>
<reference key="8">
    <citation type="journal article" date="2006" name="J. Virol.">
        <title>Regulated cleavages at the West Nile virus NS4A-2K-NS4B junctions play a major role in rearranging cytoplasmic membranes and Golgi trafficking of the NS4A protein.</title>
        <authorList>
            <person name="Roosendaal J."/>
            <person name="Westaway E.G."/>
            <person name="Khromykh A."/>
            <person name="Mackenzie J.M."/>
        </authorList>
    </citation>
    <scope>FUNCTION (NON-STRUCTURAL PROTEIN 4A)</scope>
</reference>
<reference key="9">
    <citation type="journal article" date="2008" name="J. Virol.">
        <title>Role of nonstructural protein NS2A in flavivirus assembly.</title>
        <authorList>
            <person name="Leung J.Y."/>
            <person name="Pijlman G.P."/>
            <person name="Kondratieva N."/>
            <person name="Hyde J."/>
            <person name="Mackenzie J.M."/>
            <person name="Khromykh A.A."/>
        </authorList>
    </citation>
    <scope>FUNCTION (NON-STRUCTURAL PROTEIN 2A)</scope>
    <scope>MUTAGENESIS OF THR-1292</scope>
    <scope>CHARACTERIZATION OF VARIANT ASN-1202</scope>
</reference>
<reference key="10">
    <citation type="journal article" date="2010" name="J. Virol.">
        <title>The NS5 protein of the virulent West Nile virus NY99 strain is a potent antagonist of type I interferon-mediated JAK-STAT signaling.</title>
        <authorList>
            <person name="Laurent-Rolle M."/>
            <person name="Boer E.F."/>
            <person name="Lubick K.J."/>
            <person name="Wolfinbarger J.B."/>
            <person name="Carmody A.B."/>
            <person name="Rockx B."/>
            <person name="Liu W."/>
            <person name="Ashour J."/>
            <person name="Shupert W.L."/>
            <person name="Holbrook M.R."/>
            <person name="Barrett A.D."/>
            <person name="Mason P.W."/>
            <person name="Bloom M.E."/>
            <person name="Garcia-Sastre A."/>
            <person name="Khromykh A.A."/>
            <person name="Best S.M."/>
        </authorList>
    </citation>
    <scope>FUNCTION (RNA-DIRECTED RNA POLYMERASE NS5)</scope>
    <scope>MUTAGENESIS OF SER-3181</scope>
</reference>
<reference key="11">
    <citation type="journal article" date="2011" name="J. Virol.">
        <title>A conserved peptide in West Nile virus NS4A protein contributes to proteolytic processing and is essential for replication.</title>
        <authorList>
            <person name="Ambrose R.L."/>
            <person name="Mackenzie J.M."/>
        </authorList>
    </citation>
    <scope>MUTAGENESIS OF PRO-2244; GLU-2245; PRO-2246 AND GLU-2247</scope>
</reference>
<reference key="12">
    <citation type="journal article" date="2015" name="Virology">
        <title>Conserved amino acids within the N-terminus of the West Nile virus NS4A protein contribute to virus replication, protein stability and membrane proliferation.</title>
        <authorList>
            <person name="Ambrose R.L."/>
            <person name="Mackenzie J.M."/>
        </authorList>
    </citation>
    <scope>FUNCTION (NON-STRUCTURAL PROTEIN 4A)</scope>
    <scope>MUTAGENESIS OF PRO-2137; PRO-2172; ASP-2173 AND GLY-2190</scope>
</reference>
<reference key="13">
    <citation type="journal article" date="2018" name="Cell. Microbiol.">
        <title>Nucleocytoplasmic shuttling of the West Nile virus RNA-dependent RNA polymerase NS5 is critical to infection.</title>
        <authorList>
            <person name="Lopez-Denman A.J."/>
            <person name="Russo A."/>
            <person name="Wagstaff K.M."/>
            <person name="White P.A."/>
            <person name="Jans D.A."/>
            <person name="Mackenzie J.M."/>
        </authorList>
    </citation>
    <scope>SUBCELLULAR LOCATION (RNA-DIRECTED RNA POLYMERASE NS5)</scope>
    <scope>MUTAGENESIS OF 2901-LYS-TYR-2902 AND 2917-ARG--LYS-2919</scope>
    <scope>NUCLEAR LOCALIZATION SIGNAL</scope>
</reference>
<reference key="14">
    <citation type="journal article" date="2021" name="Virology">
        <title>Nuclear localisation of West Nile virus NS5 protein modulates host gene expression.</title>
        <authorList>
            <person name="Lopez-Denman A.J."/>
            <person name="Tuipulotu D.E."/>
            <person name="Ross J.B."/>
            <person name="Trenerry A.M."/>
            <person name="White P.A."/>
            <person name="Mackenzie J.M."/>
        </authorList>
    </citation>
    <scope>FUNCTION</scope>
</reference>
<reference key="15">
    <citation type="journal article" date="2004" name="Structure">
        <title>West Nile virus core protein; tetramer structure and ribbon formation.</title>
        <authorList>
            <person name="Dokland T."/>
            <person name="Walsh M."/>
            <person name="Mackenzie J.M."/>
            <person name="Khromykh A.A."/>
            <person name="Ee K.H."/>
            <person name="Wang S."/>
        </authorList>
    </citation>
    <scope>X-RAY CRYSTALLOGRAPHY (3.20 ANGSTROMS) OF 23-98 IN COMPLEX WITH CALCIUM</scope>
    <scope>SUBUNIT (CAPSID PROTEIN C)</scope>
</reference>
<reference evidence="34 35 36" key="16">
    <citation type="journal article" date="2007" name="J. Biol. Chem.">
        <title>Crystal structure of the RNA polymerase domain of the West Nile virus non-structural protein 5.</title>
        <authorList>
            <person name="Malet H."/>
            <person name="Egloff M.P."/>
            <person name="Selisko B."/>
            <person name="Butcher R.E."/>
            <person name="Wright P.J."/>
            <person name="Roberts M."/>
            <person name="Gruez A."/>
            <person name="Sulzenbacher G."/>
            <person name="Vonrhein C."/>
            <person name="Bricogne G."/>
            <person name="Mackenzie J.M."/>
            <person name="Khromykh A.A."/>
            <person name="Davidson A.D."/>
            <person name="Canard B."/>
        </authorList>
    </citation>
    <scope>X-RAY CRYSTALLOGRAPHY (2.35 ANGSTROMS) OF 2846-3433 IN COMPLEX WITH ZINC</scope>
</reference>
<reference evidence="38" key="17">
    <citation type="journal article" date="2007" name="J. Mol. Biol.">
        <title>Crystal structure and activity of Kunjin virus NS3 helicase; protease and helicase domain assembly in the full length NS3 protein.</title>
        <authorList>
            <person name="Mastrangelo E."/>
            <person name="Milani M."/>
            <person name="Bollati M."/>
            <person name="Selisko B."/>
            <person name="Peyrane F."/>
            <person name="Pandini V."/>
            <person name="Sorrentino G."/>
            <person name="Canard B."/>
            <person name="Konarev P.V."/>
            <person name="Svergun D.I."/>
            <person name="de Lamballerie X."/>
            <person name="Coutard B."/>
            <person name="Khromykh A.A."/>
            <person name="Bolognesi M."/>
        </authorList>
    </citation>
    <scope>X-RAY CRYSTALLOGRAPHY (3.10 ANGSTROMS) OF 1691-2124</scope>
    <scope>CATALYTIC ACTIVITY (SERINE PROTEASE/HELICASE NS3)</scope>
</reference>
<reference evidence="37" key="18">
    <citation type="journal article" date="2007" name="J. Virol.">
        <title>Structure of immature West Nile virus.</title>
        <authorList>
            <person name="Zhang Y."/>
            <person name="Kaufmann B."/>
            <person name="Chipman P.R."/>
            <person name="Kuhn R.J."/>
            <person name="Rossmann M.G."/>
        </authorList>
    </citation>
    <scope>STRUCTURE BY ELECTRON MICROSCOPY (24.00 ANGSTROMS) OF 291-690</scope>
    <scope>SUBCELLULAR LOCATION (ENVELOPE PROTEIN E)</scope>
    <scope>GLYCOSYLATION AT ASN-138</scope>
</reference>